<organism>
    <name type="scientific">Homo sapiens</name>
    <name type="common">Human</name>
    <dbReference type="NCBI Taxonomy" id="9606"/>
    <lineage>
        <taxon>Eukaryota</taxon>
        <taxon>Metazoa</taxon>
        <taxon>Chordata</taxon>
        <taxon>Craniata</taxon>
        <taxon>Vertebrata</taxon>
        <taxon>Euteleostomi</taxon>
        <taxon>Mammalia</taxon>
        <taxon>Eutheria</taxon>
        <taxon>Euarchontoglires</taxon>
        <taxon>Primates</taxon>
        <taxon>Haplorrhini</taxon>
        <taxon>Catarrhini</taxon>
        <taxon>Hominidae</taxon>
        <taxon>Homo</taxon>
    </lineage>
</organism>
<name>DQA1_HUMAN</name>
<comment type="function">
    <text>Binds peptides derived from antigens that access the endocytic route of antigen presenting cells (APC) and presents them on the cell surface for recognition by the CD4 T-cells. The peptide binding cleft accommodates peptides of 10-30 residues. The peptides presented by MHC class II molecules are generated mostly by degradation of proteins that access the endocytic route, where they are processed by lysosomal proteases and other hydrolases. Exogenous antigens that have been endocytosed by the APC are thus readily available for presentation via MHC II molecules, and for this reason this antigen presentation pathway is usually referred to as exogenous. As membrane proteins on their way to degradation in lysosomes as part of their normal turn-over are also contained in the endosomal/lysosomal compartments, exogenous antigens must compete with those derived from endogenous components. Autophagy is also a source of endogenous peptides, autophagosomes constitutively fuse with MHC class II loading compartments. In addition to APCs, other cells of the gastrointestinal tract, such as epithelial cells, express MHC class II molecules and CD74 and act as APCs, which is an unusual trait of the GI tract. To produce a MHC class II molecule that presents an antigen, three MHC class II molecules (heterodimers of an alpha and a beta chain) associate with a CD74 trimer in the ER to form a heterononamer. Soon after the entry of this complex into the endosomal/lysosomal system where antigen processing occurs, CD74 undergoes a sequential degradation by various proteases, including CTSS and CTSL, leaving a small fragment termed CLIP (class-II-associated invariant chain peptide). The removal of CLIP is facilitated by HLA-DM via direct binding to the alpha-beta-CLIP complex so that CLIP is released. HLA-DM stabilizes MHC class II molecules until primary high affinity antigenic peptides are bound. The MHC II molecule bound to a peptide is then transported to the cell membrane surface. In B-cells, the interaction between HLA-DM and MHC class II molecules is regulated by HLA-DO. Primary dendritic cells (DCs) also to express HLA-DO. Lysosomal microenvironment has been implicated in the regulation of antigen loading into MHC II molecules, increased acidification produces increased proteolysis and efficient peptide loading.</text>
</comment>
<comment type="subunit">
    <text evidence="3 4 5 6">Heterodimer of an alpha and a beta subunit; also referred as MHC class II molecule. In the endoplasmic reticulum (ER) it forms a heterononamer; 3 MHC class II molecules bind to a CD74 homotrimer (also known as invariant chain or HLA class II histocompatibility antigen gamma chain). In the endosomal/lysosomal system; CD74 undergoes sequential degradation by various proteases; leaving a small fragment termed CLIP on each MHC class II molecule. MHC class II molecule interacts with HLA_DM, and HLA_DO in B-cells, in order to release CLIP and facilitate the binding of antigenic peptides.</text>
</comment>
<comment type="interaction">
    <interactant intactId="EBI-713389">
        <id>P01909</id>
    </interactant>
    <interactant intactId="EBI-1038012">
        <id>P01920</id>
        <label>HLA-DQB1</label>
    </interactant>
    <organismsDiffer>false</organismsDiffer>
    <experiments>9</experiments>
</comment>
<comment type="subcellular location">
    <subcellularLocation>
        <location>Cell membrane</location>
        <topology>Single-pass type I membrane protein</topology>
    </subcellularLocation>
    <subcellularLocation>
        <location>Endoplasmic reticulum membrane</location>
        <topology>Single-pass type I membrane protein</topology>
    </subcellularLocation>
    <subcellularLocation>
        <location>Golgi apparatus</location>
        <location>trans-Golgi network membrane</location>
        <topology>Single-pass type I membrane protein</topology>
    </subcellularLocation>
    <subcellularLocation>
        <location>Endosome membrane</location>
        <topology>Single-pass type I membrane protein</topology>
    </subcellularLocation>
    <subcellularLocation>
        <location>Lysosome membrane</location>
        <topology>Single-pass type I membrane protein</topology>
    </subcellularLocation>
    <text>The MHC class II complex transits through a number of intracellular compartments in the endocytic pathway until it reaches the cell membrane for antigen presentation.</text>
</comment>
<comment type="polymorphism">
    <text>The following alleles of DQA1 are known: DQA1*01:01, DQA1*01:02, DQA1*01:03, DQA1*01:04, DQA1*01:05, DQA1*01:06, DQA1*01:07, DQA1*02:01, DQA1*03:01, DQA1*03:02, DQA1*03:03, DQA1*04:01, DQA1*04:02, DQA1*04:03, DQA1*04:04, DQA1*05:01, DQA1*05:02, DQA1*05:03, DQA1*05:04, DQA1*05:05, DQA1*05:06, DQA1*05:07, DQA1*05:08, DQA1*05:09, DQA1*06:01, DQA1*06:02. The sequence shown is that of DQA1*05:01.</text>
</comment>
<comment type="polymorphism">
    <text>DQ2 (heterodimer of DQA1*05:01/DQB1*02:01) is associated with more than 90% of celiac disease patients. A minority displays DQ8 (heterodimer of DQA1*03/DQB1*03:02). DQ0602 (heterodimer of DQA1*01:02/DQB1*06:02) confers dominant protection against type 1 diabetes (T1D) and strong susceptibility to narcolepsy.</text>
</comment>
<comment type="similarity">
    <text evidence="8">Belongs to the MHC class II family.</text>
</comment>
<comment type="sequence caution" evidence="8">
    <conflict type="erroneous gene model prediction">
        <sequence resource="EMBL-CDS" id="AAD56720"/>
    </conflict>
</comment>
<feature type="signal peptide" evidence="7">
    <location>
        <begin position="1"/>
        <end position="23"/>
    </location>
</feature>
<feature type="chain" id="PRO_0000018970" description="HLA class II histocompatibility antigen, DQ alpha 1 chain">
    <location>
        <begin position="24"/>
        <end position="254"/>
    </location>
</feature>
<feature type="topological domain" description="Extracellular" evidence="1">
    <location>
        <begin position="24"/>
        <end position="216"/>
    </location>
</feature>
<feature type="transmembrane region" description="Helical" evidence="1">
    <location>
        <begin position="217"/>
        <end position="239"/>
    </location>
</feature>
<feature type="topological domain" description="Cytoplasmic">
    <location>
        <begin position="240"/>
        <end position="254"/>
    </location>
</feature>
<feature type="domain" description="Ig-like C1-type">
    <location>
        <begin position="112"/>
        <end position="204"/>
    </location>
</feature>
<feature type="region of interest" description="Alpha-1">
    <location>
        <begin position="24"/>
        <end position="119"/>
    </location>
</feature>
<feature type="region of interest" description="Alpha-2">
    <location>
        <begin position="120"/>
        <end position="203"/>
    </location>
</feature>
<feature type="region of interest" description="Connecting peptide">
    <location>
        <begin position="204"/>
        <end position="216"/>
    </location>
</feature>
<feature type="glycosylation site" description="N-linked (GlcNAc...) asparagine" evidence="1">
    <location>
        <position position="103"/>
    </location>
</feature>
<feature type="glycosylation site" description="N-linked (GlcNAc...) asparagine" evidence="1">
    <location>
        <position position="143"/>
    </location>
</feature>
<feature type="disulfide bond" evidence="2 3 4 6">
    <location>
        <begin position="132"/>
        <end position="188"/>
    </location>
</feature>
<feature type="sequence variant" id="VAR_033399" description="In allele DQA1*01:01, allele DQA1*01:02, allele DQA1*01:03, allele DQA1*01:04, allele DQA1*01:05, allele DQA1*04:01 and allele DQA1*06:01; dbSNP:rs1047989.">
    <original>M</original>
    <variation>L</variation>
    <location>
        <position position="8"/>
    </location>
</feature>
<feature type="sequence variant" id="VAR_033400" description="In allele DQA1*05:05, allele DQA1*05:08 and allele DQA1*05:09; dbSNP:rs1047992.">
    <original>A</original>
    <variation>T</variation>
    <location>
        <position position="11"/>
    </location>
</feature>
<feature type="sequence variant" id="VAR_050380" description="In allele DQA1*01:04 and allele DQA1*01:05; dbSNP:rs12722039.">
    <original>V</original>
    <variation>M</variation>
    <location>
        <position position="17"/>
    </location>
</feature>
<feature type="sequence variant" id="VAR_050381" description="In allele DQA1*03:03; dbSNP:rs11545686.">
    <original>M</original>
    <variation>T</variation>
    <location>
        <position position="18"/>
    </location>
</feature>
<feature type="sequence variant" id="VAR_060493" description="In allele DQA1*05:09; dbSNP:rs41545012.">
    <original>E</original>
    <variation>K</variation>
    <location>
        <position position="24"/>
    </location>
</feature>
<feature type="sequence variant" id="VAR_050382" description="In allele DQA1*01:04 and allele DQA1*01:05; dbSNP:rs12722042.">
    <original>D</original>
    <variation>G</variation>
    <location>
        <position position="25"/>
    </location>
</feature>
<feature type="sequence variant" id="VAR_060494" description="In allele DQA1*01:01, allele DQA1*01:02, allele DQA1*01:03, allele DQA1*01:04, allele DQA1*01:05, allele DQA1*01:06 and allele DQA1*01:07; dbSNP:rs1129740.">
    <original>Y</original>
    <variation>C</variation>
    <location>
        <position position="34"/>
    </location>
</feature>
<feature type="sequence variant" id="VAR_033401" description="In allele DQA1*01:01, allele DQA1*01:02, allele DQA1*01:03, allele DQA1*01:04, allele DQA1*01:05, allele DQA1*01:06 and allele DQA1*01:07; dbSNP:rs1071630.">
    <original>S</original>
    <variation>F</variation>
    <location>
        <position position="41"/>
    </location>
</feature>
<feature type="sequence variant" id="VAR_060495" description="In allele DQA1*05:04; dbSNP:rs41549715.">
    <original>P</original>
    <variation>L</variation>
    <location>
        <position position="44"/>
    </location>
</feature>
<feature type="sequence variant" id="VAR_033402" description="In allele DQA1*02:01, allele DQA1*01:03, allele DQA1*06:01 and allele DQA1*06:02; dbSNP:rs12722051.">
    <original>Y</original>
    <variation>F</variation>
    <location>
        <position position="48"/>
    </location>
</feature>
<feature type="sequence variant" id="VAR_033403" description="In allele DQA1*03:01, allele DQA1*03:02 and allele DQA1*03:03; dbSNP:rs1048023.">
    <original>T</original>
    <variation>S</variation>
    <location>
        <position position="49"/>
    </location>
</feature>
<feature type="sequence variant" id="VAR_014604" description="In allele DQA1*01:01, allele DQA1*01:04, allele DQA1*01:05, allele DQA1*01:07, allele DQA1*02:01, allele DQA1*03:01, allele DQA1*03:02 and allele DQA1*03:03; dbSNP:rs10093.">
    <original>Q</original>
    <variation>E</variation>
    <location>
        <position position="57"/>
    </location>
</feature>
<feature type="sequence variant" id="VAR_060496" description="In allele DQA1*01:01, allele DQA1*01:02, allele DQA1*01:03, allele DQA1*01:04, allele DQA1*01:05, allele DQA1*01:06, allele DQA1*01:07, allele DQA1*02:01, allele DQA1*03:01, allele DQA1*03:02 and allele DQA1*03:03; dbSNP:rs1142323.">
    <original>G</original>
    <variation>E</variation>
    <location>
        <position position="63"/>
    </location>
</feature>
<feature type="sequence variant" id="VAR_050383" description="In allele DQA1*01:03; dbSNP:rs36219699.">
    <original>R</original>
    <variation>K</variation>
    <location>
        <position position="64"/>
    </location>
</feature>
<feature type="sequence variant" id="VAR_060497" description="In allele DQA1*01:06; dbSNP:rs41543221.">
    <original>T</original>
    <variation>A</variation>
    <location>
        <position position="67"/>
    </location>
</feature>
<feature type="sequence variant" id="VAR_060498" description="In allele DQA1*01:01, allele DQA1*01:02, allele DQA1*01:03, allele DQA1*01:04, allele DQA1*01:05, allele DQA1*01:06 and allele DQA1*01:07; dbSNP:rs1142324.">
    <original>V</original>
    <variation>A</variation>
    <location>
        <position position="68"/>
    </location>
</feature>
<feature type="sequence variant" id="VAR_060499" description="In allele DQA1*02:01; requires 2 nucleotide substitutions.">
    <original>C</original>
    <variation>K</variation>
    <location>
        <position position="70"/>
    </location>
</feature>
<feature type="sequence variant" id="VAR_060500" description="In allele DQA1*03:01, allele DQA1*03:02 and allele DQA1*03:03; requires 2 nucleotide substitutions.">
    <original>C</original>
    <variation>Q</variation>
    <location>
        <position position="70"/>
    </location>
</feature>
<feature type="sequence variant" id="VAR_060501" description="In allele DQA1*01:01, allele DQA1*01:02, allele DQA1*01:03, allele DQA1*01:04, allele DQA1*01:05, allele DQA1*01:06 and allele DQA1*01:07; dbSNP:rs1142326.">
    <original>C</original>
    <variation>R</variation>
    <location>
        <position position="70"/>
    </location>
</feature>
<feature type="sequence variant" id="VAR_033404" description="In dbSNP:rs3207983.">
    <original>C</original>
    <variation>Y</variation>
    <location>
        <position position="70"/>
    </location>
</feature>
<feature type="sequence variant" id="VAR_060502" description="In allele DQA1*01:01, allele DQA1*01:02,allele DQA1*01:03, allele DQA1*01:04, allele DQA1*01:05, allele DQA1*01:06 and allele DQA1*01:07; dbSNP:rs1142328.">
    <original>L</original>
    <variation>W</variation>
    <location>
        <position position="71"/>
    </location>
</feature>
<feature type="sequence variant" id="VAR_033406" description="In dbSNP:rs760671632.">
    <original>V</original>
    <variation>D</variation>
    <location>
        <position position="73"/>
    </location>
</feature>
<feature type="sequence variant" id="VAR_060503" description="In allele DQA1*01:01, allele DQA1*01:02, allele DQA1*01:03, allele DQA1*01:04, allele DQA1*01:05, allele DQA1*01:06 and allele DQA1*01:07; dbSNP:rs3208105.">
    <original>V</original>
    <variation>E</variation>
    <location>
        <position position="73"/>
    </location>
</feature>
<feature type="sequence variant" id="VAR_033405" description="In allele DQA1*02:01, allele DQA1*03:01, allele DQA1*03:02 and allele DQA1*03:03; dbSNP:rs12722061.">
    <original>V</original>
    <variation>L</variation>
    <location>
        <position position="73"/>
    </location>
</feature>
<feature type="sequence variant" id="VAR_060504" description="In allele DQA1*01:01, allele DQA1*01:02, allele DQA1*01:03, allele DQA1*01:04, allele DQA1*01:05, allele DQA1*01:06, allele DQA1*01:07, allele DQA1*02:01, allele DQA1*03:01, allele DQA1*03:02 and allele DQA1*03:03; dbSNP:rs9272698.">
    <original>L</original>
    <variation>F</variation>
    <location>
        <position position="74"/>
    </location>
</feature>
<feature type="sequence variant" id="VAR_060505" description="In allele DQA1*02:01; dbSNP:rs28383449.">
    <original>R</original>
    <variation>H</variation>
    <location>
        <position position="75"/>
    </location>
</feature>
<feature type="sequence variant" id="VAR_060506" description="In allele DQA1*01:01, allele DQA1*01:02, allele DQA1*01:03, allele DQA1*01:04, allele DQA1*01:05, allele DQA1*01:06 and allele DQA1*01:07; dbSNP:rs9272699.">
    <original>R</original>
    <variation>S</variation>
    <location>
        <position position="75"/>
    </location>
</feature>
<feature type="sequence variant" id="VAR_060507" description="In allele DQA1*01:01, allele DQA1*01:02, allele DQA1*01:03, allele DQA1*01:04, allele DQA1*01:05, allele DQA1*01:06 and allele DQA1*01:07; dbSNP:rs1048052.">
    <original>Q</original>
    <variation>K</variation>
    <location>
        <position position="76"/>
    </location>
</feature>
<feature type="sequence variant" id="VAR_060508" description="In allele DQA1*02:01, allele DQA1*03:01, allele DQA1*03:02 and allele DQA1*03:03; dbSNP:rs12722069.">
    <original>Q</original>
    <variation>R</variation>
    <location>
        <position position="76"/>
    </location>
</feature>
<feature type="sequence variant" id="VAR_060509" description="In allele DQA1*02:01; dbSNP:rs3188043.">
    <original>F</original>
    <variation>L</variation>
    <location>
        <position position="77"/>
    </location>
</feature>
<feature type="sequence variant" id="VAR_060510" description="In allele DQA1*01:01, allele DQA1*01:02, allele DQA1*01:03, allele DQA1*01:04, allele DQA1*01:05,allele DQA1*01:06 and allele DQA1*01:07; dbSNP:rs4193.">
    <original>R</original>
    <variation>GG</variation>
    <location>
        <position position="78"/>
    </location>
</feature>
<feature type="sequence variant" id="VAR_060511" description="In allele DQA1*03:01, allele DQA1*03:02 and allele DQA1*03:03.">
    <original>R</original>
    <variation>RR</variation>
    <location>
        <position position="78"/>
    </location>
</feature>
<feature type="sequence variant" id="VAR_060512" description="In allele DQA1*05:02; dbSNP:rs41541412.">
    <original>P</original>
    <variation>R</variation>
    <location>
        <position position="81"/>
    </location>
</feature>
<feature type="sequence variant" id="VAR_060513" description="In allele DQA1*01:01, allele DQA1*01:02, allele DQA1*01:03, allele DQA1*01:04, allele DQA1*01:05, allele DQA1*01:06 and allele DQA1*01:07; requires 2 nucleotide substitutions.">
    <original>F</original>
    <variation>G</variation>
    <location>
        <position position="83"/>
    </location>
</feature>
<feature type="sequence variant" id="VAR_033408" description="In allele DQA1*01:01, allele DQA1*01:02, allele DQA1*01:03, allele DQA1*01:04, allele DQA1*01:05, allele DQA1*01:06 and allele DQA1*01:07; dbSNP:rs1142333.">
    <original>T</original>
    <variation>R</variation>
    <location>
        <position position="86"/>
    </location>
</feature>
<feature type="sequence variant" id="VAR_033409" description="In allele DQA1*01:01, allele DQA1*01:02, allele DQA1*01:03, allele DQA1*01:04, allele DQA1*01:05, allele DQA1*01:06 and allele DQA1*01:07; dbSNP:rs1142334.">
    <original>I</original>
    <variation>M</variation>
    <location>
        <position position="88"/>
    </location>
</feature>
<feature type="sequence variant" id="VAR_060514" description="In allele DQA1*01:01, allele DQA1*01:02, allele DQA1*01:03, allele DQA1*01:04, allele DQA1*01:05, allele DQA1*01:06 and allele DQA1*01:07; requires 2 nucleotide substitutions.">
    <original>L</original>
    <variation>A</variation>
    <location>
        <position position="91"/>
    </location>
</feature>
<feature type="sequence variant" id="VAR_060515" description="In allele DQA1*04:01, allele DQA1*04:02, allele DQA1*04:04, allele DQA1*06:01 and allele DQA1*06:02; requires 2 nucleotide substitutions.">
    <original>L</original>
    <variation>T</variation>
    <location>
        <position position="91"/>
    </location>
</feature>
<feature type="sequence variant" id="VAR_060516" description="In allele DQA1*01:01, allele DQA1*01:02, allele DQA1*01:03, allele DQA1*01:04, allele DQA1*01:05, allele DQA1*01:06, allele DQA1*01:07, allele DQA1*02:01, allele DQA1*03:01, allele DQA1*03:02, allele DQA1*03:03, allele DQA1*04:01, allele DQA1*04:02, allele DQA1*04:04, allele DQA1*06:01 and allele DQA1*06:02; dbSNP:rs9279910.">
    <original>S</original>
    <variation>I</variation>
    <location>
        <position position="97"/>
    </location>
</feature>
<feature type="sequence variant" id="VAR_060517" description="In allele DQA1*01:01, allele DQA1*01:02, allele DQA1*01:03, allele DQA1*01:04, allele DQA1*01:05, allele DQA1*01:06 and allele DQA1*01:07; dbSNP:rs1064944.">
    <original>L</original>
    <variation>M</variation>
    <location>
        <position position="98"/>
    </location>
</feature>
<feature type="sequence variant" id="VAR_060518" description="In allele DQA1*03:01, allele DQA1*03:02 and allele DQA1*03:03; dbSNP:rs1064944.">
    <original>L</original>
    <variation>V</variation>
    <location>
        <position position="98"/>
    </location>
</feature>
<feature type="sequence variant" id="VAR_060519" description="In allele DQA1*01:07; dbSNP:rs41542116.">
    <original>R</original>
    <variation>C</variation>
    <location>
        <position position="101"/>
    </location>
</feature>
<feature type="sequence variant" id="VAR_050384" description="In allele DQA1*01:01, allele DQA1*01:02, allele DQA1*01:03, allele DQA1*01:04, allele DQA1*01:05, allele DQA1*01:06 and allele DQA1*01:07; dbSNP:rs1129808.">
    <original>S</original>
    <variation>Y</variation>
    <location>
        <position position="102"/>
    </location>
</feature>
<feature type="sequence variant" id="VAR_060520" description="In allele DQA1*05:06; dbSNP:rs41555012.">
    <original>L</original>
    <variation>V</variation>
    <location>
        <position position="124"/>
    </location>
</feature>
<feature type="sequence variant" id="VAR_050385" description="In allele DQA1*01:01, allele DQA1*01:02, allele DQA1*01:03, allele DQA1*01:04, allele DQA1*01:05, allele DQA1*01:07, allele DQA1*02:01, allele DQA1*03:01, allele DQA1*03:02, allele DQA1*03:03, allele DQA1*04:01, allele DQA1*04:02, allele DQA1*04:04, allele DQA1*06:01 and allele DQA1*06:02; dbSNP:rs707952.">
    <original>I</original>
    <variation>T</variation>
    <location>
        <position position="129"/>
    </location>
</feature>
<feature type="sequence variant" id="VAR_050386" description="In allele DQA1*01:01, allele DQA1*01:02, allele DQA1*01:04, allele DQA1*01:05 and allele DQA1*01:07; dbSNP:rs707950.">
    <original>H</original>
    <variation>Q</variation>
    <location>
        <position position="151"/>
    </location>
</feature>
<feature type="sequence variant" id="VAR_060521" description="In allele DQA1*01:03; dbSNP:rs41547417.">
    <original>S</original>
    <variation>A</variation>
    <location>
        <position position="152"/>
    </location>
</feature>
<feature type="sequence variant" id="VAR_060522" description="In allele DQA1*04:02; dbSNP:rs41545514.">
    <original>T</original>
    <variation>I</variation>
    <location>
        <position position="160"/>
    </location>
</feature>
<feature type="sequence variant" id="VAR_060524" description="In allele DQA1*05:08; dbSNP:rs41544114.">
    <original>S</original>
    <variation>I</variation>
    <location>
        <position position="161"/>
    </location>
</feature>
<feature type="sequence variant" id="VAR_060523" description="In allele DQA1*06:02; dbSNP:rs41552014.">
    <original>S</original>
    <variation>R</variation>
    <location>
        <position position="161"/>
    </location>
</feature>
<feature type="sequence variant" id="VAR_060525" description="In allele DQA1*04:04; dbSNP:rs41550317.">
    <original>Y</original>
    <variation>H</variation>
    <location>
        <position position="175"/>
    </location>
</feature>
<feature type="sequence variant" id="VAR_060526" description="In allele DQA1*01:01, allele DQA1*01:02, allele DQA1*01:03, allele DQA1*01:04, allele DQA1*01:05, allele DQA1*01:07, allele DQA1*02:01, allele DQA1*03:01, allele DQA1*03:02, allele DQA1*03:03, allele DQA1*04:01, allele DQA1*04:02, allele DQA1*04:04, allele DQA1*06:01 and allele DQA1*06:02; dbSNP:rs707949.">
    <original>L</original>
    <variation>F</variation>
    <location>
        <position position="178"/>
    </location>
</feature>
<feature type="sequence variant" id="VAR_060527" description="In allele DQA1*03:02 and allele DQA1*03:03; dbSNP:rs7990.">
    <original>A</original>
    <variation>D</variation>
    <location>
        <position position="182"/>
    </location>
</feature>
<feature type="sequence variant" id="VAR_060528" description="In allele DQA1*05:03, allele DQA1*05:06 and allele DQA1*05:07; dbSNP:rs41561312.">
    <original>A</original>
    <variation>S</variation>
    <location>
        <position position="182"/>
    </location>
</feature>
<feature type="sequence variant" id="VAR_060529" description="In allele DQA1*01:01, allele DQA1*01:02, allele DQA1*01:03, allele DQA1*01:04, allele DQA1*01:05, allele DQA1*01:07, allele DQA1*02:01, allele DQA1*03:01, allele DQA1*03:02, allele DQA1*03:03, allele DQA1*04:01, allele DQA1*04:02, allele DQA1*04:04, allele DQA1*06:01 and allele DQA1*06:02; dbSNP:rs707963.">
    <original>E</original>
    <variation>D</variation>
    <location>
        <position position="183"/>
    </location>
</feature>
<feature type="sequence variant" id="VAR_060530" description="In allele DQA1*01:01, allele DQA1*01:02, allele DQA1*01:03, allele DQA1*01:04, allele DQA1*01:05, allele DQA1*01:07, allele DQA1*02:01, allele DQA1*03:01, allele DQA1*03:02, allele DQA1*03:03, allele DQA1*04:01, allele DQA1*04:02, allele DQA1*04:04, allele DQA1*06:01 and allele DQA1*06:02; dbSNP:rs707962.">
    <original>S</original>
    <variation>I</variation>
    <location>
        <position position="185"/>
    </location>
</feature>
<feature type="sequence variant" id="VAR_060531" description="In allele DQA1*02:01, allele DQA1*03:01, allele DQA1*03:02, allele DQA1*03:03, allele DQA1*04:01, allele DQA1*04:02, allele DQA1*04:04, allele DQA1*06:01 and allele DQA1*06:02; dbSNP:rs2308891.">
    <original>K</original>
    <variation>E</variation>
    <location>
        <position position="197"/>
    </location>
</feature>
<feature type="sequence variant" id="VAR_060532" description="In allele DQA1*01:01, allele DQA1*01:02, allele DQA1*01:03, allele DQA1*01:04, allele DQA1*01:05 and allele DQA1*01:07; dbSNP:rs2308891.">
    <original>K</original>
    <variation>Q</variation>
    <location>
        <position position="197"/>
    </location>
</feature>
<feature type="sequence variant" id="VAR_050387" description="In allele DQA1*03:01, allele DQA1*03:02 and allele DQA1*03:03; dbSNP:rs9272785.">
    <original>A</original>
    <variation>T</variation>
    <location>
        <position position="209"/>
    </location>
</feature>
<feature type="sequence variant" id="VAR_050388" description="In allele DQA1*01:04; dbSNP:rs35087390.">
    <original>A</original>
    <variation>T</variation>
    <location>
        <position position="221"/>
    </location>
</feature>
<feature type="sequence variant" id="VAR_033411" description="In allele DQA1*01:02; dbSNP:rs9260.">
    <original>V</original>
    <variation>M</variation>
    <location>
        <position position="229"/>
    </location>
</feature>
<feature type="sequence variant" id="VAR_060533" description="In allele DQA1*05:07; dbSNP:rs41545416.">
    <original>G</original>
    <variation>C</variation>
    <location>
        <position position="230"/>
    </location>
</feature>
<feature type="sequence variant" id="VAR_033412" description="In allele DQA1*02:01, allele DQA1*03:01, allele DQA1*03:02 and allele DQA1*03:03; dbSNP:rs1048430.">
    <original>F</original>
    <variation>L</variation>
    <location>
        <position position="237"/>
    </location>
</feature>
<feature type="sequence variant" id="VAR_033413" description="In allele DQA1*01:01, allele DQA1*01:02, allele DQA1*01:03, allele DQA1*01:04 and allele DQA1*01:05; dbSNP:rs1048439.">
    <original>R</original>
    <variation>Q</variation>
    <location>
        <position position="240"/>
    </location>
</feature>
<feature type="sequence conflict" description="In Ref. 4; AAA59760." evidence="8" ref="4">
    <original>A</original>
    <variation>S</variation>
    <location>
        <position position="11"/>
    </location>
</feature>
<feature type="sequence conflict" description="In Ref. 16; AAA59754." evidence="8" ref="16">
    <location>
        <begin position="23"/>
        <end position="27"/>
    </location>
</feature>
<feature type="sequence conflict" description="In Ref. 4; AAA59760." evidence="8" ref="4">
    <original>L</original>
    <variation>H</variation>
    <location>
        <position position="91"/>
    </location>
</feature>
<feature type="sequence conflict" description="In Ref. 16; AAA59754." evidence="8" ref="16">
    <original>A</original>
    <variation>P</variation>
    <location>
        <position position="107"/>
    </location>
</feature>
<feature type="sequence conflict" description="In Ref. 3; CAA25141." evidence="8" ref="3">
    <original>G</original>
    <variation>D</variation>
    <location>
        <position position="156"/>
    </location>
</feature>
<feature type="sequence conflict" description="In Ref. 16; AAA59754." evidence="8" ref="16">
    <original>E</original>
    <variation>D</variation>
    <location>
        <position position="213"/>
    </location>
</feature>
<feature type="strand" evidence="11">
    <location>
        <begin position="29"/>
        <end position="40"/>
    </location>
</feature>
<feature type="turn" evidence="11">
    <location>
        <begin position="41"/>
        <end position="44"/>
    </location>
</feature>
<feature type="strand" evidence="11">
    <location>
        <begin position="45"/>
        <end position="52"/>
    </location>
</feature>
<feature type="strand" evidence="11">
    <location>
        <begin position="55"/>
        <end position="61"/>
    </location>
</feature>
<feature type="turn" evidence="11">
    <location>
        <begin position="62"/>
        <end position="65"/>
    </location>
</feature>
<feature type="strand" evidence="11">
    <location>
        <begin position="66"/>
        <end position="71"/>
    </location>
</feature>
<feature type="helix" evidence="11">
    <location>
        <begin position="72"/>
        <end position="76"/>
    </location>
</feature>
<feature type="helix" evidence="11">
    <location>
        <begin position="81"/>
        <end position="101"/>
    </location>
</feature>
<feature type="turn" evidence="9">
    <location>
        <begin position="102"/>
        <end position="104"/>
    </location>
</feature>
<feature type="strand" evidence="11">
    <location>
        <begin position="113"/>
        <end position="120"/>
    </location>
</feature>
<feature type="strand" evidence="10">
    <location>
        <begin position="124"/>
        <end position="126"/>
    </location>
</feature>
<feature type="strand" evidence="11">
    <location>
        <begin position="128"/>
        <end position="137"/>
    </location>
</feature>
<feature type="strand" evidence="11">
    <location>
        <begin position="143"/>
        <end position="148"/>
    </location>
</feature>
<feature type="strand" evidence="11">
    <location>
        <begin position="151"/>
        <end position="153"/>
    </location>
</feature>
<feature type="strand" evidence="11">
    <location>
        <begin position="157"/>
        <end position="159"/>
    </location>
</feature>
<feature type="strand" evidence="12">
    <location>
        <begin position="166"/>
        <end position="168"/>
    </location>
</feature>
<feature type="strand" evidence="11">
    <location>
        <begin position="170"/>
        <end position="178"/>
    </location>
</feature>
<feature type="strand" evidence="11">
    <location>
        <begin position="186"/>
        <end position="191"/>
    </location>
</feature>
<feature type="strand" evidence="11">
    <location>
        <begin position="195"/>
        <end position="197"/>
    </location>
</feature>
<feature type="strand" evidence="11">
    <location>
        <begin position="199"/>
        <end position="203"/>
    </location>
</feature>
<feature type="helix" evidence="12">
    <location>
        <begin position="212"/>
        <end position="243"/>
    </location>
</feature>
<proteinExistence type="evidence at protein level"/>
<accession>P01909</accession>
<accession>O19630</accession>
<accession>O19706</accession>
<accession>P01907</accession>
<accession>P01908</accession>
<accession>P04225</accession>
<accession>P04226</accession>
<accession>P05536</accession>
<accession>P79553</accession>
<accession>Q06751</accession>
<accession>Q29876</accession>
<accession>Q29994</accession>
<accession>Q2Q6Y6</accession>
<accession>Q2Q6Y7</accession>
<accession>Q2Q6Y8</accession>
<accession>Q2WCM3</accession>
<accession>Q30064</accession>
<accession>Q30067</accession>
<accession>Q30068</accession>
<accession>Q30070</accession>
<accession>Q30071</accession>
<accession>Q30072</accession>
<accession>Q30073</accession>
<accession>Q30086</accession>
<accession>Q30101</accession>
<accession>Q5Y7D5</accession>
<accession>Q5Y7F5</accession>
<accession>Q6ICU6</accession>
<accession>Q6PR46</accession>
<accession>Q6QDB1</accession>
<accession>Q860W2</accession>
<accession>Q860W4</accession>
<accession>Q9BD37</accession>
<accession>Q9TPM3</accession>
<accession>Q9UM31</accession>
<reference key="1">
    <citation type="journal article" date="1983" name="Nature">
        <title>The heavy chain of human B-cell alloantigen HLA-DS has a variable N-terminal region and a constant immunoglobulin-like region.</title>
        <authorList>
            <person name="Chang H.-C."/>
            <person name="Moriuchi T."/>
            <person name="Silver J."/>
        </authorList>
    </citation>
    <scope>NUCLEOTIDE SEQUENCE [MRNA] (ALLELE DQA1*02:01)</scope>
</reference>
<reference key="2">
    <citation type="journal article" date="1984" name="EMBO J.">
        <title>Both alpha and beta chains of HLA-DC class II histocompatibility antigens display extensive polymorphism in their amino-terminal domains.</title>
        <authorList>
            <person name="Schenning L."/>
            <person name="Larhammar D."/>
            <person name="Bill P."/>
            <person name="Wiman K."/>
            <person name="Jonsson A.-K."/>
            <person name="Rask L."/>
            <person name="Peterson P.A."/>
        </authorList>
    </citation>
    <scope>NUCLEOTIDE SEQUENCE [MRNA] (ALLELE DQA1*05:01)</scope>
</reference>
<reference key="3">
    <citation type="journal article" date="1984" name="Nature">
        <title>Isotypic and allotypic variation of human class II histocompatibility antigen alpha-chain genes.</title>
        <authorList>
            <person name="Auffray C."/>
            <person name="Lillie J.W."/>
            <person name="Arnot D."/>
            <person name="Grossberger D."/>
            <person name="Kappes D."/>
            <person name="Strominger J.L."/>
        </authorList>
    </citation>
    <scope>NUCLEOTIDE SEQUENCE [MRNA] (ALLELES DQA1*01:02 AND ALLELE DQA1*03:01)</scope>
</reference>
<reference key="4">
    <citation type="journal article" date="1987" name="J. Immunol.">
        <title>Complete sequence of the HLA DQ alpha and DQ beta cDNA from a DR5/DQw3 cell line.</title>
        <authorList>
            <person name="Schiffenbauer J."/>
            <person name="Didier D.K."/>
            <person name="Klearman M."/>
            <person name="Rice K."/>
            <person name="Shuman S."/>
            <person name="Tieber V.L."/>
            <person name="Kittlesen D.J."/>
            <person name="Schwartz B.D."/>
        </authorList>
    </citation>
    <scope>NUCLEOTIDE SEQUENCE [MRNA] (ALLELE DQA1*05:01)</scope>
</reference>
<reference key="5">
    <citation type="journal article" date="1997" name="Immunogenetics">
        <title>HLA class II haplotype and sequence analysis support a role for DQ in narcolepsy.</title>
        <authorList>
            <person name="Ellis M.C."/>
            <person name="Hetisimer A.H."/>
            <person name="Ruddy D.A."/>
            <person name="Hansen S.L."/>
            <person name="Kronmal G.S."/>
            <person name="McClelland E."/>
            <person name="Quintana L."/>
            <person name="Drayna D.T."/>
            <person name="Aldrich M.S."/>
            <person name="Mignot E."/>
        </authorList>
    </citation>
    <scope>NUCLEOTIDE SEQUENCE [GENOMIC DNA] (ALLELE DQA1*05:01)</scope>
</reference>
<reference key="6">
    <citation type="journal article" date="2005" name="Genome Res.">
        <title>Ancient haplotypes of the HLA Class II region.</title>
        <authorList>
            <person name="Raymond C.K."/>
            <person name="Kas A."/>
            <person name="Paddock M."/>
            <person name="Qiu R."/>
            <person name="Zhou Y."/>
            <person name="Subramanian S."/>
            <person name="Chang J."/>
            <person name="Palmieri A."/>
            <person name="Haugen E."/>
            <person name="Kaul R."/>
            <person name="Olson M.V."/>
        </authorList>
    </citation>
    <scope>NUCLEOTIDE SEQUENCE [GENOMIC DNA] (ALLELES DQA1*01:01; DQA1*01:02 AND DQA1*03:01)</scope>
</reference>
<reference key="7">
    <citation type="journal article" date="2006" name="Tissue Antigens">
        <title>Four novel human leukocyte antigen-DQA1 alleles identified in the Korean population.</title>
        <authorList>
            <person name="Lee K.W."/>
            <person name="Jung Y.A."/>
            <person name="Oh D.H."/>
        </authorList>
    </citation>
    <scope>NUCLEOTIDE SEQUENCE [GENOMIC DNA] (ALLELES DQA1*01:02; DQA1*05:06; DQA1*05:07 AND DQA1*05:08)</scope>
</reference>
<reference key="8">
    <citation type="journal article" date="1987" name="J. Biol. Chem.">
        <title>Class II genes of the human major histocompatibility complex. Comparisons of the DQ and DX alpha and beta genes.</title>
        <authorList>
            <person name="Jonsson A.-K."/>
            <person name="Hyldig-Nielsen J.-J."/>
            <person name="Servenius B."/>
            <person name="Larhammar D."/>
            <person name="Andersson G."/>
            <person name="Joergensen F."/>
            <person name="Peterson P.A."/>
            <person name="Rask L."/>
        </authorList>
    </citation>
    <scope>NUCLEOTIDE SEQUENCE [GENOMIC DNA] (ALLELE DQA1*03:01)</scope>
</reference>
<reference key="9">
    <citation type="submission" date="2001-06" db="EMBL/GenBank/DDBJ databases">
        <title>Identification of a novel DQA1 allele, DQA1*01012, and confirmatory sequence of DQA1*01011.</title>
        <authorList>
            <person name="Ashdown M.L."/>
            <person name="Leas L."/>
            <person name="Gavrilidis A."/>
            <person name="Wood J.M."/>
            <person name="Simons M.J."/>
        </authorList>
    </citation>
    <scope>NUCLEOTIDE SEQUENCE [GENOMIC DNA] (ALLELE DQA1*01:01)</scope>
</reference>
<reference key="10">
    <citation type="submission" date="2004-05" db="EMBL/GenBank/DDBJ databases">
        <title>Cloning of human full open reading frames in Gateway(TM) system entry vector (pDONR201).</title>
        <authorList>
            <person name="Ebert L."/>
            <person name="Schick M."/>
            <person name="Neubert P."/>
            <person name="Schatten R."/>
            <person name="Henze S."/>
            <person name="Korn B."/>
        </authorList>
    </citation>
    <scope>NUCLEOTIDE SEQUENCE [LARGE SCALE MRNA] (ALLELE DQA1*02:01)</scope>
</reference>
<reference key="11">
    <citation type="submission" date="2005-07" db="EMBL/GenBank/DDBJ databases">
        <title>New and confirmatory HLA sequences by SBT.</title>
        <authorList>
            <person name="Voorter C.E."/>
            <person name="van den Berg-Loonen E.M."/>
        </authorList>
    </citation>
    <scope>NUCLEOTIDE SEQUENCE [GENOMIC DNA] (ALLELES DQA1*01:02 AND DQA1*05:09)</scope>
</reference>
<reference key="12">
    <citation type="journal article" date="2004" name="Nat. Genet.">
        <title>Complete sequencing and characterization of 21,243 full-length human cDNAs.</title>
        <authorList>
            <person name="Ota T."/>
            <person name="Suzuki Y."/>
            <person name="Nishikawa T."/>
            <person name="Otsuki T."/>
            <person name="Sugiyama T."/>
            <person name="Irie R."/>
            <person name="Wakamatsu A."/>
            <person name="Hayashi K."/>
            <person name="Sato H."/>
            <person name="Nagai K."/>
            <person name="Kimura K."/>
            <person name="Makita H."/>
            <person name="Sekine M."/>
            <person name="Obayashi M."/>
            <person name="Nishi T."/>
            <person name="Shibahara T."/>
            <person name="Tanaka T."/>
            <person name="Ishii S."/>
            <person name="Yamamoto J."/>
            <person name="Saito K."/>
            <person name="Kawai Y."/>
            <person name="Isono Y."/>
            <person name="Nakamura Y."/>
            <person name="Nagahari K."/>
            <person name="Murakami K."/>
            <person name="Yasuda T."/>
            <person name="Iwayanagi T."/>
            <person name="Wagatsuma M."/>
            <person name="Shiratori A."/>
            <person name="Sudo H."/>
            <person name="Hosoiri T."/>
            <person name="Kaku Y."/>
            <person name="Kodaira H."/>
            <person name="Kondo H."/>
            <person name="Sugawara M."/>
            <person name="Takahashi M."/>
            <person name="Kanda K."/>
            <person name="Yokoi T."/>
            <person name="Furuya T."/>
            <person name="Kikkawa E."/>
            <person name="Omura Y."/>
            <person name="Abe K."/>
            <person name="Kamihara K."/>
            <person name="Katsuta N."/>
            <person name="Sato K."/>
            <person name="Tanikawa M."/>
            <person name="Yamazaki M."/>
            <person name="Ninomiya K."/>
            <person name="Ishibashi T."/>
            <person name="Yamashita H."/>
            <person name="Murakawa K."/>
            <person name="Fujimori K."/>
            <person name="Tanai H."/>
            <person name="Kimata M."/>
            <person name="Watanabe M."/>
            <person name="Hiraoka S."/>
            <person name="Chiba Y."/>
            <person name="Ishida S."/>
            <person name="Ono Y."/>
            <person name="Takiguchi S."/>
            <person name="Watanabe S."/>
            <person name="Yosida M."/>
            <person name="Hotuta T."/>
            <person name="Kusano J."/>
            <person name="Kanehori K."/>
            <person name="Takahashi-Fujii A."/>
            <person name="Hara H."/>
            <person name="Tanase T.-O."/>
            <person name="Nomura Y."/>
            <person name="Togiya S."/>
            <person name="Komai F."/>
            <person name="Hara R."/>
            <person name="Takeuchi K."/>
            <person name="Arita M."/>
            <person name="Imose N."/>
            <person name="Musashino K."/>
            <person name="Yuuki H."/>
            <person name="Oshima A."/>
            <person name="Sasaki N."/>
            <person name="Aotsuka S."/>
            <person name="Yoshikawa Y."/>
            <person name="Matsunawa H."/>
            <person name="Ichihara T."/>
            <person name="Shiohata N."/>
            <person name="Sano S."/>
            <person name="Moriya S."/>
            <person name="Momiyama H."/>
            <person name="Satoh N."/>
            <person name="Takami S."/>
            <person name="Terashima Y."/>
            <person name="Suzuki O."/>
            <person name="Nakagawa S."/>
            <person name="Senoh A."/>
            <person name="Mizoguchi H."/>
            <person name="Goto Y."/>
            <person name="Shimizu F."/>
            <person name="Wakebe H."/>
            <person name="Hishigaki H."/>
            <person name="Watanabe T."/>
            <person name="Sugiyama A."/>
            <person name="Takemoto M."/>
            <person name="Kawakami B."/>
            <person name="Yamazaki M."/>
            <person name="Watanabe K."/>
            <person name="Kumagai A."/>
            <person name="Itakura S."/>
            <person name="Fukuzumi Y."/>
            <person name="Fujimori Y."/>
            <person name="Komiyama M."/>
            <person name="Tashiro H."/>
            <person name="Tanigami A."/>
            <person name="Fujiwara T."/>
            <person name="Ono T."/>
            <person name="Yamada K."/>
            <person name="Fujii Y."/>
            <person name="Ozaki K."/>
            <person name="Hirao M."/>
            <person name="Ohmori Y."/>
            <person name="Kawabata A."/>
            <person name="Hikiji T."/>
            <person name="Kobatake N."/>
            <person name="Inagaki H."/>
            <person name="Ikema Y."/>
            <person name="Okamoto S."/>
            <person name="Okitani R."/>
            <person name="Kawakami T."/>
            <person name="Noguchi S."/>
            <person name="Itoh T."/>
            <person name="Shigeta K."/>
            <person name="Senba T."/>
            <person name="Matsumura K."/>
            <person name="Nakajima Y."/>
            <person name="Mizuno T."/>
            <person name="Morinaga M."/>
            <person name="Sasaki M."/>
            <person name="Togashi T."/>
            <person name="Oyama M."/>
            <person name="Hata H."/>
            <person name="Watanabe M."/>
            <person name="Komatsu T."/>
            <person name="Mizushima-Sugano J."/>
            <person name="Satoh T."/>
            <person name="Shirai Y."/>
            <person name="Takahashi Y."/>
            <person name="Nakagawa K."/>
            <person name="Okumura K."/>
            <person name="Nagase T."/>
            <person name="Nomura N."/>
            <person name="Kikuchi H."/>
            <person name="Masuho Y."/>
            <person name="Yamashita R."/>
            <person name="Nakai K."/>
            <person name="Yada T."/>
            <person name="Nakamura Y."/>
            <person name="Ohara O."/>
            <person name="Isogai T."/>
            <person name="Sugano S."/>
        </authorList>
    </citation>
    <scope>NUCLEOTIDE SEQUENCE [LARGE SCALE MRNA] (ALLELE DQA1*01:01)</scope>
    <source>
        <tissue>Trachea</tissue>
    </source>
</reference>
<reference key="13">
    <citation type="journal article" date="2003" name="Nature">
        <title>The DNA sequence and analysis of human chromosome 6.</title>
        <authorList>
            <person name="Mungall A.J."/>
            <person name="Palmer S.A."/>
            <person name="Sims S.K."/>
            <person name="Edwards C.A."/>
            <person name="Ashurst J.L."/>
            <person name="Wilming L."/>
            <person name="Jones M.C."/>
            <person name="Horton R."/>
            <person name="Hunt S.E."/>
            <person name="Scott C.E."/>
            <person name="Gilbert J.G.R."/>
            <person name="Clamp M.E."/>
            <person name="Bethel G."/>
            <person name="Milne S."/>
            <person name="Ainscough R."/>
            <person name="Almeida J.P."/>
            <person name="Ambrose K.D."/>
            <person name="Andrews T.D."/>
            <person name="Ashwell R.I.S."/>
            <person name="Babbage A.K."/>
            <person name="Bagguley C.L."/>
            <person name="Bailey J."/>
            <person name="Banerjee R."/>
            <person name="Barker D.J."/>
            <person name="Barlow K.F."/>
            <person name="Bates K."/>
            <person name="Beare D.M."/>
            <person name="Beasley H."/>
            <person name="Beasley O."/>
            <person name="Bird C.P."/>
            <person name="Blakey S.E."/>
            <person name="Bray-Allen S."/>
            <person name="Brook J."/>
            <person name="Brown A.J."/>
            <person name="Brown J.Y."/>
            <person name="Burford D.C."/>
            <person name="Burrill W."/>
            <person name="Burton J."/>
            <person name="Carder C."/>
            <person name="Carter N.P."/>
            <person name="Chapman J.C."/>
            <person name="Clark S.Y."/>
            <person name="Clark G."/>
            <person name="Clee C.M."/>
            <person name="Clegg S."/>
            <person name="Cobley V."/>
            <person name="Collier R.E."/>
            <person name="Collins J.E."/>
            <person name="Colman L.K."/>
            <person name="Corby N.R."/>
            <person name="Coville G.J."/>
            <person name="Culley K.M."/>
            <person name="Dhami P."/>
            <person name="Davies J."/>
            <person name="Dunn M."/>
            <person name="Earthrowl M.E."/>
            <person name="Ellington A.E."/>
            <person name="Evans K.A."/>
            <person name="Faulkner L."/>
            <person name="Francis M.D."/>
            <person name="Frankish A."/>
            <person name="Frankland J."/>
            <person name="French L."/>
            <person name="Garner P."/>
            <person name="Garnett J."/>
            <person name="Ghori M.J."/>
            <person name="Gilby L.M."/>
            <person name="Gillson C.J."/>
            <person name="Glithero R.J."/>
            <person name="Grafham D.V."/>
            <person name="Grant M."/>
            <person name="Gribble S."/>
            <person name="Griffiths C."/>
            <person name="Griffiths M.N.D."/>
            <person name="Hall R."/>
            <person name="Halls K.S."/>
            <person name="Hammond S."/>
            <person name="Harley J.L."/>
            <person name="Hart E.A."/>
            <person name="Heath P.D."/>
            <person name="Heathcott R."/>
            <person name="Holmes S.J."/>
            <person name="Howden P.J."/>
            <person name="Howe K.L."/>
            <person name="Howell G.R."/>
            <person name="Huckle E."/>
            <person name="Humphray S.J."/>
            <person name="Humphries M.D."/>
            <person name="Hunt A.R."/>
            <person name="Johnson C.M."/>
            <person name="Joy A.A."/>
            <person name="Kay M."/>
            <person name="Keenan S.J."/>
            <person name="Kimberley A.M."/>
            <person name="King A."/>
            <person name="Laird G.K."/>
            <person name="Langford C."/>
            <person name="Lawlor S."/>
            <person name="Leongamornlert D.A."/>
            <person name="Leversha M."/>
            <person name="Lloyd C.R."/>
            <person name="Lloyd D.M."/>
            <person name="Loveland J.E."/>
            <person name="Lovell J."/>
            <person name="Martin S."/>
            <person name="Mashreghi-Mohammadi M."/>
            <person name="Maslen G.L."/>
            <person name="Matthews L."/>
            <person name="McCann O.T."/>
            <person name="McLaren S.J."/>
            <person name="McLay K."/>
            <person name="McMurray A."/>
            <person name="Moore M.J.F."/>
            <person name="Mullikin J.C."/>
            <person name="Niblett D."/>
            <person name="Nickerson T."/>
            <person name="Novik K.L."/>
            <person name="Oliver K."/>
            <person name="Overton-Larty E.K."/>
            <person name="Parker A."/>
            <person name="Patel R."/>
            <person name="Pearce A.V."/>
            <person name="Peck A.I."/>
            <person name="Phillimore B.J.C.T."/>
            <person name="Phillips S."/>
            <person name="Plumb R.W."/>
            <person name="Porter K.M."/>
            <person name="Ramsey Y."/>
            <person name="Ranby S.A."/>
            <person name="Rice C.M."/>
            <person name="Ross M.T."/>
            <person name="Searle S.M."/>
            <person name="Sehra H.K."/>
            <person name="Sheridan E."/>
            <person name="Skuce C.D."/>
            <person name="Smith S."/>
            <person name="Smith M."/>
            <person name="Spraggon L."/>
            <person name="Squares S.L."/>
            <person name="Steward C.A."/>
            <person name="Sycamore N."/>
            <person name="Tamlyn-Hall G."/>
            <person name="Tester J."/>
            <person name="Theaker A.J."/>
            <person name="Thomas D.W."/>
            <person name="Thorpe A."/>
            <person name="Tracey A."/>
            <person name="Tromans A."/>
            <person name="Tubby B."/>
            <person name="Wall M."/>
            <person name="Wallis J.M."/>
            <person name="West A.P."/>
            <person name="White S.S."/>
            <person name="Whitehead S.L."/>
            <person name="Whittaker H."/>
            <person name="Wild A."/>
            <person name="Willey D.J."/>
            <person name="Wilmer T.E."/>
            <person name="Wood J.M."/>
            <person name="Wray P.W."/>
            <person name="Wyatt J.C."/>
            <person name="Young L."/>
            <person name="Younger R.M."/>
            <person name="Bentley D.R."/>
            <person name="Coulson A."/>
            <person name="Durbin R.M."/>
            <person name="Hubbard T."/>
            <person name="Sulston J.E."/>
            <person name="Dunham I."/>
            <person name="Rogers J."/>
            <person name="Beck S."/>
        </authorList>
    </citation>
    <scope>NUCLEOTIDE SEQUENCE [LARGE SCALE GENOMIC DNA] (ALLELES DQA1*01:02; DQA1*03:01 AND DQA1*05:01)</scope>
</reference>
<reference key="14">
    <citation type="journal article" date="2004" name="Genome Res.">
        <title>The status, quality, and expansion of the NIH full-length cDNA project: the Mammalian Gene Collection (MGC).</title>
        <authorList>
            <consortium name="The MGC Project Team"/>
        </authorList>
    </citation>
    <scope>NUCLEOTIDE SEQUENCE [LARGE SCALE MRNA] (ALLELES DQA1*03:01 AND DQA1*05:01)</scope>
    <source>
        <tissue>Lymph</tissue>
    </source>
</reference>
<reference key="15">
    <citation type="submission" date="1996-07" db="EMBL/GenBank/DDBJ databases">
        <title>Sequence polymorphisms in HLA-DQA1 exon1.</title>
        <authorList>
            <person name="Yasunaga S."/>
            <person name="Kimura A."/>
            <person name="Sasazuki T."/>
        </authorList>
    </citation>
    <scope>NUCLEOTIDE SEQUENCE [MRNA] OF 1-27 (ALLELES DQA1*01:01/DQA1*01:02/DQA1*01:03; DQA1*01:04; DQA1*01:05; DQA1*02:01/DQA1*03:01/DQA1*03:03; DQA1*04:01/DQA1*06:01 AND DQA1*05:01/DQA1*05:03/DQA1*05:05)</scope>
    <source>
        <tissue>B-cell</tissue>
    </source>
</reference>
<reference key="16">
    <citation type="journal article" date="1985" name="Proc. Natl. Acad. Sci. U.S.A.">
        <title>Nucleotide sequence of an HLA-DQ alpha chain derived from a DRw9 cell line: genetic and evolutionary implications.</title>
        <authorList>
            <person name="Moriuchi J."/>
            <person name="Moriuchi T."/>
            <person name="Silver J."/>
        </authorList>
    </citation>
    <scope>NUCLEOTIDE SEQUENCE [MRNA] OF 19-254 (ALLELE DQA1*03:02)</scope>
</reference>
<reference key="17">
    <citation type="journal article" date="1988" name="Immunogenetics">
        <title>MHC class II sequences of an HLA-DR2 narcoleptic.</title>
        <authorList>
            <person name="Lock C.B."/>
            <person name="So A.K."/>
            <person name="Welsh K.I."/>
            <person name="Parkes J.D."/>
            <person name="Trowsdale J."/>
        </authorList>
    </citation>
    <scope>NUCLEOTIDE SEQUENCE [MRNA] OF 23-254 (ALLELE DQA1*01:02)</scope>
</reference>
<reference key="18">
    <citation type="journal article" date="1996" name="Tissue Antigens">
        <title>Different contribution of HLA-DR and -DQ genes in susceptibility and resistance to insulin-dependent diabetes mellitus (IDDM).</title>
        <authorList>
            <person name="Yasunaga S."/>
            <person name="Kimura A."/>
            <person name="Hamaguchi K."/>
            <person name="Ronningen K.S."/>
            <person name="Sasazuki T."/>
        </authorList>
    </citation>
    <scope>NUCLEOTIDE SEQUENCE [MRNA] OF 24-250 (ALLELE DQA1*03:02/DQA1*03:03) AND NUCLEOTIDE SEQUENCE [MRNA] OF 24-249 (ALLELES DQA1*01:01; DQA1*01:03; DQA1*01:04; DQA1*04:01; DQA1*05:03; DQA1*05:05 AND DQA1*06:01)</scope>
</reference>
<reference key="19">
    <citation type="submission" date="1996-01" db="EMBL/GenBank/DDBJ databases">
        <authorList>
            <person name="Yasunaga S."/>
        </authorList>
    </citation>
    <scope>NUCLEOTIDE SEQUENCE [MRNA] OF 24-249 (ALLELE DQA1*01:05)</scope>
</reference>
<reference key="20">
    <citation type="journal article" date="1983" name="Hoppe-Seyler's Z. Physiol. Chem.">
        <title>Primary structure of human class II histocompatibility antigens 3rd communication. Amino acid sequence comparison between DR and DC subclass antigens derived from a lymphoblastoid B cell line homozygous at the HLA loci (HLA-A3,3; B7,7; Dw2,2; DR2,2: MT1,1; Dc1,1: MB1,1).</title>
        <authorList>
            <person name="Goetz H."/>
            <person name="Kratzin H."/>
            <person name="Thinnes F.P."/>
            <person name="Yang C.-Y."/>
            <person name="Kruse T."/>
            <person name="Pauly E."/>
            <person name="Koelbel S."/>
            <person name="Egert G."/>
            <person name="Wernet P."/>
            <person name="Hilschmann N."/>
        </authorList>
    </citation>
    <scope>PROTEIN SEQUENCE OF 24-89; 102-120 AND 164-212 (ALLELE DQA1*01:02)</scope>
</reference>
<reference key="21">
    <citation type="journal article" date="1989" name="J. Immunol.">
        <title>Molecular analysis of the HLA class II genes in two DRw6-related haplotypes, DRw13 DQw1 and DRw14 DQw3.</title>
        <authorList>
            <person name="Kao H.T."/>
            <person name="Gregersen P.K."/>
            <person name="Tang J.C."/>
            <person name="Takahashi T."/>
            <person name="Wang C.Y."/>
            <person name="Silver J."/>
        </authorList>
    </citation>
    <scope>NUCLEOTIDE SEQUENCE [MRNA] OF 24-209 (ALLELE DQA1*05:01)</scope>
</reference>
<reference key="22">
    <citation type="journal article" date="2005" name="Tissue Antigens">
        <title>High-resolution genotyping of HLA-DQA1 in the GoKinD study and identification of novel alleles HLA-DQA1*040102, HLA-DQA1*0402 and HLA-DQA1*0404.</title>
        <authorList>
            <person name="Cordovado S.K."/>
            <person name="Hancock L.N."/>
            <person name="Simone A.E."/>
            <person name="Hendrix M."/>
            <person name="Mueller P.W."/>
        </authorList>
    </citation>
    <scope>NUCLEOTIDE SEQUENCE [GENOMIC DNA] OF 29-203 (ALLELES DQA1*04:02 AND DQA1*04:04)</scope>
</reference>
<reference key="23">
    <citation type="submission" date="2002-12" db="EMBL/GenBank/DDBJ databases">
        <title>Identification of a novel HLA-DQA1*06 allele detected by sequence-based typing.</title>
        <authorList>
            <person name="Simone A.E."/>
            <person name="Cordovado S.K."/>
            <person name="Hendrix M.M."/>
            <person name="Mueller P.W."/>
        </authorList>
    </citation>
    <scope>NUCLEOTIDE SEQUENCE [GENOMIC DNA] OF 29-203 (ALLELE DQA1*06:02)</scope>
</reference>
<reference key="24">
    <citation type="submission" date="2004-03" db="EMBL/GenBank/DDBJ databases">
        <title>Identification of a novel HLA-DQA1*01 allele detected by sequence-based typing.</title>
        <authorList>
            <person name="Hancock L.N."/>
            <person name="Cordovado S.K."/>
            <person name="Mueller P.W."/>
        </authorList>
    </citation>
    <scope>NUCLEOTIDE SEQUENCE [GENOMIC DNA] OF 29-203 (ALLELE DQA1*01:07)</scope>
</reference>
<reference key="25">
    <citation type="journal article" date="1988" name="Hum. Immunol.">
        <title>Sequence analysis of HLA class II genes from insulin-dependent diabetic individuals.</title>
        <authorList>
            <person name="Horn G.T."/>
            <person name="Bugawan T.L."/>
            <person name="Long C.M."/>
            <person name="Manos M.M."/>
            <person name="Erlich H.A."/>
        </authorList>
    </citation>
    <scope>NUCLEOTIDE SEQUENCE [GENOMIC DNA] OF 29-110 (ALLELE DQA1*01:02)</scope>
    <scope>NUCLEOTIDE SEQUENCE [GENOMIC DNA] OF 29-109 (ALLELE DQA1*05:01)</scope>
</reference>
<reference key="26">
    <citation type="submission" date="1997-01" db="EMBL/GenBank/DDBJ databases">
        <title>DQA1 subtyping in Australian Aborigines. Additional evidence for heterogeneity.</title>
        <authorList>
            <person name="Trejaut J.A."/>
            <person name="Greville W.D."/>
            <person name="Dunckley H."/>
        </authorList>
    </citation>
    <scope>NUCLEOTIDE SEQUENCE [GENOMIC DNA] OF 29-109 (ALLELE DQA1*05:04)</scope>
</reference>
<reference key="27">
    <citation type="journal article" date="1999" name="Tissue Antigens">
        <title>Identification of a novel HLA-DQA1 allele (DQA1*0106) by sequence-based DQA1 typing.</title>
        <authorList>
            <person name="Luo M."/>
            <person name="Blanchard J."/>
            <person name="Maclean I."/>
            <person name="Brunham R."/>
        </authorList>
    </citation>
    <scope>NUCLEOTIDE SEQUENCE [GENOMIC DNA] OF 31-109 (ALLELE DQA1*01:06)</scope>
</reference>
<reference key="28">
    <citation type="journal article" date="1992" name="Tissue Antigens">
        <title>HLA class II nucleotide sequences, 1992.</title>
        <authorList>
            <person name="Marsh S.G."/>
            <person name="Bodomer J.G."/>
        </authorList>
    </citation>
    <scope>NUCLEOTIDE SEQUENCE [GENOMIC DNA] OF 35-74 (ALLELE DQA1*05:02)</scope>
</reference>
<reference key="29">
    <citation type="journal article" date="1988" name="J. Immunol.">
        <title>Molecular studies of a rare DR2/LD-5a/DQw3 HLA class II haplotype. Multiple genetic mechanisms in the generation of polymorphic HLA class II genes.</title>
        <authorList>
            <person name="Liu C.P."/>
            <person name="Bach F.H."/>
            <person name="Wu S.K."/>
        </authorList>
    </citation>
    <scope>NUCLEOTIDE SEQUENCE [MRNA] OF 36-254 (ALLELE DQA1*05:01)</scope>
</reference>
<reference key="30">
    <citation type="journal article" date="1990" name="J. Immunol.">
        <authorList>
            <person name="Liu C.P."/>
            <person name="Bach F.H."/>
            <person name="Wu S.K."/>
        </authorList>
    </citation>
    <scope>ERRATUM OF PUBMED:3129499</scope>
</reference>
<reference key="31">
    <citation type="journal article" date="1982" name="Proc. Natl. Acad. Sci. U.S.A.">
        <title>cDNA clone for the heavy chain of the human B cell alloantigen DC1: strong sequence homology to the HLA-DR heavy chain.</title>
        <authorList>
            <person name="Auffray C."/>
            <person name="Korman A.J."/>
            <person name="Roux-Dosseto M."/>
            <person name="Bono R."/>
            <person name="Strominger J.L."/>
        </authorList>
    </citation>
    <scope>NUCLEOTIDE SEQUENCE [MRNA] OF 40-254 (ALLELE DQA1*03:01)</scope>
</reference>
<reference key="32">
    <citation type="journal article" date="1989" name="Proc. Natl. Acad. Sci. U.S.A.">
        <title>Ancient roots for polymorphism at the HLA-DQ alpha locus in primates.</title>
        <authorList>
            <person name="Gyllensten U.B."/>
            <person name="Erlich H.A."/>
        </authorList>
    </citation>
    <scope>NUCLEOTIDE SEQUENCE [GENOMIC DNA] OF 41-102 (ALLELE DQA1*05:01)</scope>
    <scope>NUCLEOTIDE SEQUENCE [GENOMIC DNA] OF 41-103 (ALLELE DQA1*01:02)</scope>
</reference>
<reference key="33">
    <citation type="journal article" date="1987" name="Immunogenetics">
        <title>Allelic forms of the alpha- and beta-chain genes encoding DQw1-positive heterodimers.</title>
        <authorList>
            <person name="Turco E."/>
            <person name="Care A."/>
            <person name="Compagnone-Post P."/>
            <person name="Robinson C."/>
            <person name="Cascino I."/>
            <person name="Trucco M."/>
        </authorList>
    </citation>
    <scope>NUCLEOTIDE SEQUENCE [MRNA] OF 119-254 (ALLELE DQA1*01:02)</scope>
</reference>
<reference key="34">
    <citation type="journal article" date="1996" name="Cell">
        <title>Invariant chain structure and MHC class II function.</title>
        <authorList>
            <person name="Cresswell P."/>
        </authorList>
    </citation>
    <scope>REVIEW</scope>
</reference>
<reference key="35">
    <citation type="journal article" date="2001" name="Mol. Immunol.">
        <title>Presentation of antigens by MHC class II molecules: getting the most out of them.</title>
        <authorList>
            <person name="Villadangos J.A."/>
        </authorList>
    </citation>
    <scope>REVIEW</scope>
</reference>
<reference key="36">
    <citation type="journal article" date="2007" name="Immunity">
        <title>Autophagy in MHC class II presentation: sampling from within.</title>
        <authorList>
            <person name="Menendez-Benito V."/>
            <person name="Neefjes J."/>
        </authorList>
    </citation>
    <scope>REVIEW</scope>
</reference>
<reference key="37">
    <citation type="journal article" date="2008" name="EMBO J.">
        <title>MHC class II molecules on the move for successful antigen presentation.</title>
        <authorList>
            <person name="Rocha N."/>
            <person name="Neefjes J."/>
        </authorList>
    </citation>
    <scope>REVIEW</scope>
</reference>
<reference key="38">
    <citation type="journal article" date="2009" name="J. Cell Sci.">
        <title>MHC class II transport at a glance.</title>
        <authorList>
            <person name="Berger A.C."/>
            <person name="Roche P.A."/>
        </authorList>
    </citation>
    <scope>REVIEW</scope>
</reference>
<reference key="39">
    <citation type="journal article" date="2009" name="World J. Gastroenterol.">
        <title>CD74 in antigen presentation, inflammation, and cancers of the gastrointestinal tract.</title>
        <authorList>
            <person name="Beswick E.J."/>
            <person name="Reyes V.E."/>
        </authorList>
    </citation>
    <scope>REVIEW</scope>
</reference>
<reference key="40">
    <citation type="journal article" date="2001" name="Nat. Immunol.">
        <title>Structure of a human insulin peptide-HLA-DQ8 complex and susceptibility to type 1 diabetes.</title>
        <authorList>
            <person name="Lee K.H."/>
            <person name="Wucherpfennig K.W."/>
            <person name="Wiley D.C."/>
        </authorList>
    </citation>
    <scope>X-RAY CRYSTALLOGRAPHY (2.4 ANGSTROMS) OF 27-207 OF HLA-DQA1/HLA-DQB1 HETERODIMER IN COMPLEX WITH INS PEPTIDE</scope>
    <scope>SUBUNIT</scope>
    <scope>GLYCOSYLATION AT ASN-103</scope>
    <scope>DISULFIDE BOND</scope>
</reference>
<reference key="41">
    <citation type="journal article" date="2004" name="Proc. Natl. Acad. Sci. U.S.A.">
        <title>Crystal structure of HLA-DQ0602 that protects against type 1 diabetes and confers strong susceptibility to narcolepsy.</title>
        <authorList>
            <person name="Siebold C."/>
            <person name="Hansen B.E."/>
            <person name="Wyer J.R."/>
            <person name="Harlos K."/>
            <person name="Esnouf R.E."/>
            <person name="Svejgaard A."/>
            <person name="Bell J.I."/>
            <person name="Strominger J.L."/>
            <person name="Jones E.Y."/>
            <person name="Fugger L."/>
        </authorList>
    </citation>
    <scope>X-RAY CRYSTALLOGRAPHY (1.8 ANGSTROMS) OF 24-219 OF HLA-DQA1/HLA-DQB1 HETERODIMER (HLA-DQ0602) IN COMPLEX WITH HCRT PEPTIDE</scope>
    <scope>POLYMORPHISM</scope>
    <scope>SUBUNIT</scope>
    <scope>DISULFIDE BOND</scope>
</reference>
<reference key="42">
    <citation type="journal article" date="2004" name="Proc. Natl. Acad. Sci. U.S.A.">
        <title>Structural basis for HLA-DQ2-mediated presentation of gluten epitopes in celiac disease.</title>
        <authorList>
            <person name="Kim C.Y."/>
            <person name="Quarsten H."/>
            <person name="Bergseng E."/>
            <person name="Khosla C."/>
            <person name="Sollid L.M."/>
        </authorList>
    </citation>
    <scope>X-RAY CRYSTALLOGRAPHY (2.22 ANGSTROMS) OF 24-216 OF HLA-DQA1/HLA-DQB1 HETERODIMER (DQ2) IN COMPLEX WITH TRITICUM AESTIVUM ALPHA/BETA-GLIADIN PEPTIDE</scope>
    <scope>SUBUNIT</scope>
    <scope>POLYMORPHISM</scope>
</reference>
<reference key="43">
    <citation type="journal article" date="2007" name="Immunity">
        <title>A structural and immunological basis for the role of human leukocyte antigen DQ8 in celiac disease.</title>
        <authorList>
            <person name="Henderson K.N."/>
            <person name="Tye-Din J.A."/>
            <person name="Reid H.H."/>
            <person name="Chen Z."/>
            <person name="Borg N.A."/>
            <person name="Beissbarth T."/>
            <person name="Tatham A."/>
            <person name="Mannering S.I."/>
            <person name="Purcell A.W."/>
            <person name="Dudek N.L."/>
            <person name="van Heel D.A."/>
            <person name="McCluskey J."/>
            <person name="Rossjohn J."/>
            <person name="Anderson R.P."/>
        </authorList>
    </citation>
    <scope>X-RAY CRYSTALLOGRAPHY (2.1 ANGSTROMS) OF 24-206 OF HLA-DQA1/HLA-DQB1 HETERODIMER IN COMPLEX WITH TRITICUM AESTIVUM ALPHA/BETA-GLIADIN</scope>
    <scope>SUBUNIT</scope>
    <scope>DISULFIDE BOND</scope>
</reference>
<evidence type="ECO:0000255" key="1"/>
<evidence type="ECO:0000255" key="2">
    <source>
        <dbReference type="PROSITE-ProRule" id="PRU00114"/>
    </source>
</evidence>
<evidence type="ECO:0000269" key="3">
    <source>
    </source>
</evidence>
<evidence type="ECO:0000269" key="4">
    <source>
    </source>
</evidence>
<evidence type="ECO:0000269" key="5">
    <source>
    </source>
</evidence>
<evidence type="ECO:0000269" key="6">
    <source>
    </source>
</evidence>
<evidence type="ECO:0000269" key="7">
    <source>
    </source>
</evidence>
<evidence type="ECO:0000305" key="8"/>
<evidence type="ECO:0007829" key="9">
    <source>
        <dbReference type="PDB" id="1JK8"/>
    </source>
</evidence>
<evidence type="ECO:0007829" key="10">
    <source>
        <dbReference type="PDB" id="4OZF"/>
    </source>
</evidence>
<evidence type="ECO:0007829" key="11">
    <source>
        <dbReference type="PDB" id="6U3M"/>
    </source>
</evidence>
<evidence type="ECO:0007829" key="12">
    <source>
        <dbReference type="PDB" id="8VSP"/>
    </source>
</evidence>
<gene>
    <name type="primary">HLA-DQA1</name>
</gene>
<protein>
    <recommendedName>
        <fullName>HLA class II histocompatibility antigen, DQ alpha 1 chain</fullName>
    </recommendedName>
    <alternativeName>
        <fullName>DC-1 alpha chain</fullName>
    </alternativeName>
    <alternativeName>
        <fullName>DC-alpha</fullName>
    </alternativeName>
    <alternativeName>
        <fullName>HLA-DCA</fullName>
    </alternativeName>
    <alternativeName>
        <fullName>MHC class II DQA1</fullName>
    </alternativeName>
</protein>
<sequence length="254" mass="27805">MILNKALMLGALALTTVMSPCGGEDIVADHVASYGVNLYQSYGPSGQYTHEFDGDEQFYVDLGRKETVWCLPVLRQFRFDPQFALTNIAVLKHNLNSLIKRSNSTAATNEVPEVTVFSKSPVTLGQPNILICLVDNIFPPVVNITWLSNGHSVTEGVSETSFLSKSDHSFFKISYLTLLPSAEESYDCKVEHWGLDKPLLKHWEPEIPAPMSELTETVVCALGLSVGLVGIVVGTVFIIRGLRSVGASRHQGPL</sequence>
<dbReference type="EMBL" id="X00033">
    <property type="protein sequence ID" value="CAA24917.1"/>
    <property type="molecule type" value="mRNA"/>
</dbReference>
<dbReference type="EMBL" id="X00370">
    <property type="status" value="NOT_ANNOTATED_CDS"/>
    <property type="molecule type" value="mRNA"/>
</dbReference>
<dbReference type="EMBL" id="X00452">
    <property type="protein sequence ID" value="CAA25141.1"/>
    <property type="molecule type" value="mRNA"/>
</dbReference>
<dbReference type="EMBL" id="M16995">
    <property type="protein sequence ID" value="AAA59760.1"/>
    <property type="molecule type" value="mRNA"/>
</dbReference>
<dbReference type="EMBL" id="U92032">
    <property type="protein sequence ID" value="AAB91990.1"/>
    <property type="molecule type" value="Genomic_DNA"/>
</dbReference>
<dbReference type="EMBL" id="AY663395">
    <property type="protein sequence ID" value="AAU87978.1"/>
    <property type="molecule type" value="Genomic_DNA"/>
</dbReference>
<dbReference type="EMBL" id="AY663398">
    <property type="protein sequence ID" value="AAU87987.1"/>
    <property type="molecule type" value="Genomic_DNA"/>
</dbReference>
<dbReference type="EMBL" id="AY663400">
    <property type="protein sequence ID" value="AAU87992.1"/>
    <property type="molecule type" value="Genomic_DNA"/>
</dbReference>
<dbReference type="EMBL" id="AY663406">
    <property type="protein sequence ID" value="AAU88007.1"/>
    <property type="molecule type" value="Genomic_DNA"/>
</dbReference>
<dbReference type="EMBL" id="AY663411">
    <property type="protein sequence ID" value="AAU88022.1"/>
    <property type="molecule type" value="Genomic_DNA"/>
</dbReference>
<dbReference type="EMBL" id="AY663413">
    <property type="protein sequence ID" value="AAU88028.1"/>
    <property type="molecule type" value="Genomic_DNA"/>
</dbReference>
<dbReference type="EMBL" id="DQ178403">
    <property type="protein sequence ID" value="ABA86855.1"/>
    <property type="molecule type" value="Genomic_DNA"/>
</dbReference>
<dbReference type="EMBL" id="DQ178400">
    <property type="protein sequence ID" value="ABA86855.1"/>
    <property type="status" value="JOINED"/>
    <property type="molecule type" value="Genomic_DNA"/>
</dbReference>
<dbReference type="EMBL" id="DQ178401">
    <property type="protein sequence ID" value="ABA86855.1"/>
    <property type="status" value="JOINED"/>
    <property type="molecule type" value="Genomic_DNA"/>
</dbReference>
<dbReference type="EMBL" id="DQ178402">
    <property type="protein sequence ID" value="ABA86855.1"/>
    <property type="status" value="JOINED"/>
    <property type="molecule type" value="Genomic_DNA"/>
</dbReference>
<dbReference type="EMBL" id="DQ178407">
    <property type="protein sequence ID" value="ABA86856.1"/>
    <property type="molecule type" value="Genomic_DNA"/>
</dbReference>
<dbReference type="EMBL" id="DQ178404">
    <property type="protein sequence ID" value="ABA86856.1"/>
    <property type="status" value="JOINED"/>
    <property type="molecule type" value="Genomic_DNA"/>
</dbReference>
<dbReference type="EMBL" id="DQ178405">
    <property type="protein sequence ID" value="ABA86856.1"/>
    <property type="status" value="JOINED"/>
    <property type="molecule type" value="Genomic_DNA"/>
</dbReference>
<dbReference type="EMBL" id="DQ178406">
    <property type="protein sequence ID" value="ABA86856.1"/>
    <property type="status" value="JOINED"/>
    <property type="molecule type" value="Genomic_DNA"/>
</dbReference>
<dbReference type="EMBL" id="DQ178411">
    <property type="protein sequence ID" value="ABA86857.1"/>
    <property type="molecule type" value="Genomic_DNA"/>
</dbReference>
<dbReference type="EMBL" id="DQ178408">
    <property type="protein sequence ID" value="ABA86857.1"/>
    <property type="status" value="JOINED"/>
    <property type="molecule type" value="Genomic_DNA"/>
</dbReference>
<dbReference type="EMBL" id="DQ178409">
    <property type="protein sequence ID" value="ABA86857.1"/>
    <property type="status" value="JOINED"/>
    <property type="molecule type" value="Genomic_DNA"/>
</dbReference>
<dbReference type="EMBL" id="DQ178410">
    <property type="protein sequence ID" value="ABA86857.1"/>
    <property type="status" value="JOINED"/>
    <property type="molecule type" value="Genomic_DNA"/>
</dbReference>
<dbReference type="EMBL" id="DQ178415">
    <property type="protein sequence ID" value="ABA86858.1"/>
    <property type="molecule type" value="Genomic_DNA"/>
</dbReference>
<dbReference type="EMBL" id="DQ178412">
    <property type="protein sequence ID" value="ABA86858.1"/>
    <property type="status" value="JOINED"/>
    <property type="molecule type" value="Genomic_DNA"/>
</dbReference>
<dbReference type="EMBL" id="DQ178413">
    <property type="protein sequence ID" value="ABA86858.1"/>
    <property type="status" value="JOINED"/>
    <property type="molecule type" value="Genomic_DNA"/>
</dbReference>
<dbReference type="EMBL" id="DQ178414">
    <property type="protein sequence ID" value="ABA86858.1"/>
    <property type="status" value="JOINED"/>
    <property type="molecule type" value="Genomic_DNA"/>
</dbReference>
<dbReference type="EMBL" id="M29616">
    <property type="protein sequence ID" value="AAA59759.1"/>
    <property type="molecule type" value="Genomic_DNA"/>
</dbReference>
<dbReference type="EMBL" id="M29613">
    <property type="protein sequence ID" value="AAA59759.1"/>
    <property type="status" value="JOINED"/>
    <property type="molecule type" value="Genomic_DNA"/>
</dbReference>
<dbReference type="EMBL" id="AF322870">
    <property type="protein sequence ID" value="AAK11577.1"/>
    <property type="molecule type" value="Genomic_DNA"/>
</dbReference>
<dbReference type="EMBL" id="AF322867">
    <property type="protein sequence ID" value="AAK11577.1"/>
    <property type="status" value="JOINED"/>
    <property type="molecule type" value="Genomic_DNA"/>
</dbReference>
<dbReference type="EMBL" id="AF322868">
    <property type="protein sequence ID" value="AAK11577.1"/>
    <property type="status" value="JOINED"/>
    <property type="molecule type" value="Genomic_DNA"/>
</dbReference>
<dbReference type="EMBL" id="AF322869">
    <property type="protein sequence ID" value="AAK11577.1"/>
    <property type="status" value="JOINED"/>
    <property type="molecule type" value="Genomic_DNA"/>
</dbReference>
<dbReference type="EMBL" id="AF395700">
    <property type="protein sequence ID" value="AAM69677.1"/>
    <property type="molecule type" value="Genomic_DNA"/>
</dbReference>
<dbReference type="EMBL" id="AF395697">
    <property type="protein sequence ID" value="AAM69677.1"/>
    <property type="status" value="JOINED"/>
    <property type="molecule type" value="Genomic_DNA"/>
</dbReference>
<dbReference type="EMBL" id="AF395698">
    <property type="protein sequence ID" value="AAM69677.1"/>
    <property type="status" value="JOINED"/>
    <property type="molecule type" value="Genomic_DNA"/>
</dbReference>
<dbReference type="EMBL" id="AF395699">
    <property type="protein sequence ID" value="AAM69677.1"/>
    <property type="status" value="JOINED"/>
    <property type="molecule type" value="Genomic_DNA"/>
</dbReference>
<dbReference type="EMBL" id="CR450297">
    <property type="protein sequence ID" value="CAG29293.1"/>
    <property type="molecule type" value="mRNA"/>
</dbReference>
<dbReference type="EMBL" id="AM042559">
    <property type="protein sequence ID" value="CAJ14960.1"/>
    <property type="molecule type" value="Genomic_DNA"/>
</dbReference>
<dbReference type="EMBL" id="AM042560">
    <property type="protein sequence ID" value="CAJ14961.1"/>
    <property type="molecule type" value="Genomic_DNA"/>
</dbReference>
<dbReference type="EMBL" id="AK313975">
    <property type="protein sequence ID" value="BAG36689.1"/>
    <property type="molecule type" value="mRNA"/>
</dbReference>
<dbReference type="EMBL" id="BX248406">
    <property type="status" value="NOT_ANNOTATED_CDS"/>
    <property type="molecule type" value="Genomic_DNA"/>
</dbReference>
<dbReference type="EMBL" id="AL662789">
    <property type="status" value="NOT_ANNOTATED_CDS"/>
    <property type="molecule type" value="Genomic_DNA"/>
</dbReference>
<dbReference type="EMBL" id="Z84489">
    <property type="protein sequence ID" value="CAB06491.1"/>
    <property type="molecule type" value="Genomic_DNA"/>
</dbReference>
<dbReference type="EMBL" id="BC008585">
    <property type="protein sequence ID" value="AAH08585.1"/>
    <property type="molecule type" value="mRNA"/>
</dbReference>
<dbReference type="EMBL" id="BC157865">
    <property type="protein sequence ID" value="AAI57866.1"/>
    <property type="molecule type" value="mRNA"/>
</dbReference>
<dbReference type="EMBL" id="L46875">
    <property type="status" value="NOT_ANNOTATED_CDS"/>
    <property type="molecule type" value="mRNA"/>
</dbReference>
<dbReference type="EMBL" id="L46876">
    <property type="status" value="NOT_ANNOTATED_CDS"/>
    <property type="molecule type" value="mRNA"/>
</dbReference>
<dbReference type="EMBL" id="L46877">
    <property type="status" value="NOT_ANNOTATED_CDS"/>
    <property type="molecule type" value="mRNA"/>
</dbReference>
<dbReference type="EMBL" id="L46878">
    <property type="status" value="NOT_ANNOTATED_CDS"/>
    <property type="molecule type" value="mRNA"/>
</dbReference>
<dbReference type="EMBL" id="L46880">
    <property type="status" value="NOT_ANNOTATED_CDS"/>
    <property type="molecule type" value="mRNA"/>
</dbReference>
<dbReference type="EMBL" id="L46881">
    <property type="status" value="NOT_ANNOTATED_CDS"/>
    <property type="molecule type" value="mRNA"/>
</dbReference>
<dbReference type="EMBL" id="M11124">
    <property type="protein sequence ID" value="AAA59754.1"/>
    <property type="molecule type" value="mRNA"/>
</dbReference>
<dbReference type="EMBL" id="M20431">
    <property type="protein sequence ID" value="AAA59758.1"/>
    <property type="molecule type" value="mRNA"/>
</dbReference>
<dbReference type="EMBL" id="L34082">
    <property type="protein sequence ID" value="AAC41950.1"/>
    <property type="molecule type" value="mRNA"/>
</dbReference>
<dbReference type="EMBL" id="L34085">
    <property type="protein sequence ID" value="AAC41953.1"/>
    <property type="molecule type" value="mRNA"/>
</dbReference>
<dbReference type="EMBL" id="L34086">
    <property type="protein sequence ID" value="AAC41954.1"/>
    <property type="molecule type" value="mRNA"/>
</dbReference>
<dbReference type="EMBL" id="L34089">
    <property type="protein sequence ID" value="AAC41957.1"/>
    <property type="molecule type" value="mRNA"/>
</dbReference>
<dbReference type="EMBL" id="L34090">
    <property type="protein sequence ID" value="AAC41958.1"/>
    <property type="molecule type" value="mRNA"/>
</dbReference>
<dbReference type="EMBL" id="L34092">
    <property type="protein sequence ID" value="AAC41960.1"/>
    <property type="molecule type" value="mRNA"/>
</dbReference>
<dbReference type="EMBL" id="L34093">
    <property type="protein sequence ID" value="AAC41961.1"/>
    <property type="molecule type" value="mRNA"/>
</dbReference>
<dbReference type="EMBL" id="L34094">
    <property type="protein sequence ID" value="AAC41962.1"/>
    <property type="molecule type" value="mRNA"/>
</dbReference>
<dbReference type="EMBL" id="L42625">
    <property type="protein sequence ID" value="AAA85334.1"/>
    <property type="molecule type" value="mRNA"/>
</dbReference>
<dbReference type="EMBL" id="AY197775">
    <property type="protein sequence ID" value="AAO45622.1"/>
    <property type="molecule type" value="Genomic_DNA"/>
</dbReference>
<dbReference type="EMBL" id="AY547314">
    <property type="protein sequence ID" value="AAS49496.1"/>
    <property type="molecule type" value="Genomic_DNA"/>
</dbReference>
<dbReference type="EMBL" id="AY206406">
    <property type="protein sequence ID" value="AAO47362.1"/>
    <property type="molecule type" value="Genomic_DNA"/>
</dbReference>
<dbReference type="EMBL" id="AY585236">
    <property type="protein sequence ID" value="AAT09985.1"/>
    <property type="molecule type" value="Genomic_DNA"/>
</dbReference>
<dbReference type="EMBL" id="M34997">
    <property type="protein sequence ID" value="AAA35772.1"/>
    <property type="molecule type" value="Genomic_DNA"/>
</dbReference>
<dbReference type="EMBL" id="M34999">
    <property type="protein sequence ID" value="AAA74633.1"/>
    <property type="molecule type" value="Genomic_DNA"/>
</dbReference>
<dbReference type="EMBL" id="U85035">
    <property type="protein sequence ID" value="AAB41891.1"/>
    <property type="molecule type" value="Genomic_DNA"/>
</dbReference>
<dbReference type="EMBL" id="AF109734">
    <property type="protein sequence ID" value="AAD56720.1"/>
    <property type="status" value="ALT_SEQ"/>
    <property type="molecule type" value="Genomic_DNA"/>
</dbReference>
<dbReference type="EMBL" id="U03675">
    <property type="protein sequence ID" value="AAB60341.1"/>
    <property type="molecule type" value="Genomic_DNA"/>
</dbReference>
<dbReference type="EMBL" id="M20506">
    <property type="protein sequence ID" value="AAA59774.1"/>
    <property type="molecule type" value="mRNA"/>
</dbReference>
<dbReference type="EMBL" id="J00199">
    <property type="status" value="NOT_ANNOTATED_CDS"/>
    <property type="molecule type" value="mRNA"/>
</dbReference>
<dbReference type="EMBL" id="M17846">
    <property type="protein sequence ID" value="AAA59707.1"/>
    <property type="molecule type" value="mRNA"/>
</dbReference>
<dbReference type="PIR" id="A02211">
    <property type="entry name" value="HLHUD1"/>
</dbReference>
<dbReference type="PIR" id="A02213">
    <property type="entry name" value="HLHUDQ"/>
</dbReference>
<dbReference type="PIR" id="A02214">
    <property type="entry name" value="HLHUD7"/>
</dbReference>
<dbReference type="PIR" id="A02215">
    <property type="entry name" value="HLHU3C"/>
</dbReference>
<dbReference type="PIR" id="A93326">
    <property type="entry name" value="HLHUDC"/>
</dbReference>
<dbReference type="PIR" id="B27628">
    <property type="entry name" value="B27628"/>
</dbReference>
<dbReference type="PIR" id="D34512">
    <property type="entry name" value="D34512"/>
</dbReference>
<dbReference type="RefSeq" id="NP_002113.2">
    <property type="nucleotide sequence ID" value="NM_002122.3"/>
</dbReference>
<dbReference type="RefSeq" id="XP_054185776.1">
    <property type="nucleotide sequence ID" value="XM_054329801.1"/>
</dbReference>
<dbReference type="RefSeq" id="XP_054185777.1">
    <property type="nucleotide sequence ID" value="XM_054329802.1"/>
</dbReference>
<dbReference type="RefSeq" id="XP_054187030.1">
    <property type="nucleotide sequence ID" value="XM_054331055.1"/>
</dbReference>
<dbReference type="RefSeq" id="XP_054187031.1">
    <property type="nucleotide sequence ID" value="XM_054331056.1"/>
</dbReference>
<dbReference type="PDB" id="1JK8">
    <property type="method" value="X-ray"/>
    <property type="resolution" value="2.40 A"/>
    <property type="chains" value="A=27-206"/>
</dbReference>
<dbReference type="PDB" id="1S9V">
    <property type="method" value="X-ray"/>
    <property type="resolution" value="2.22 A"/>
    <property type="chains" value="A/D=24-216"/>
</dbReference>
<dbReference type="PDB" id="1UVQ">
    <property type="method" value="X-ray"/>
    <property type="resolution" value="1.80 A"/>
    <property type="chains" value="A=24-218"/>
</dbReference>
<dbReference type="PDB" id="2NNA">
    <property type="method" value="X-ray"/>
    <property type="resolution" value="2.10 A"/>
    <property type="chains" value="A=24-206"/>
</dbReference>
<dbReference type="PDB" id="4GG6">
    <property type="method" value="X-ray"/>
    <property type="resolution" value="3.20 A"/>
    <property type="chains" value="A/C=24-206"/>
</dbReference>
<dbReference type="PDB" id="4OZF">
    <property type="method" value="X-ray"/>
    <property type="resolution" value="2.70 A"/>
    <property type="chains" value="A=24-206"/>
</dbReference>
<dbReference type="PDB" id="4OZG">
    <property type="method" value="X-ray"/>
    <property type="resolution" value="3.00 A"/>
    <property type="chains" value="A/C=24-206"/>
</dbReference>
<dbReference type="PDB" id="4OZH">
    <property type="method" value="X-ray"/>
    <property type="resolution" value="2.80 A"/>
    <property type="chains" value="A/C=24-206"/>
</dbReference>
<dbReference type="PDB" id="4OZI">
    <property type="method" value="X-ray"/>
    <property type="resolution" value="3.20 A"/>
    <property type="chains" value="A/C=24-206"/>
</dbReference>
<dbReference type="PDB" id="5KSA">
    <property type="method" value="X-ray"/>
    <property type="resolution" value="2.00 A"/>
    <property type="chains" value="A=24-206"/>
</dbReference>
<dbReference type="PDB" id="5KSB">
    <property type="method" value="X-ray"/>
    <property type="resolution" value="2.90 A"/>
    <property type="chains" value="A/C=24-206"/>
</dbReference>
<dbReference type="PDB" id="5KSU">
    <property type="method" value="X-ray"/>
    <property type="resolution" value="2.73 A"/>
    <property type="chains" value="A/D=24-216"/>
</dbReference>
<dbReference type="PDB" id="5KSV">
    <property type="method" value="X-ray"/>
    <property type="resolution" value="2.19 A"/>
    <property type="chains" value="A=24-216"/>
</dbReference>
<dbReference type="PDB" id="6MFF">
    <property type="method" value="X-ray"/>
    <property type="resolution" value="2.60 A"/>
    <property type="chains" value="A=24-206"/>
</dbReference>
<dbReference type="PDB" id="6MFG">
    <property type="method" value="X-ray"/>
    <property type="resolution" value="2.00 A"/>
    <property type="chains" value="A/C=24-206"/>
</dbReference>
<dbReference type="PDB" id="6U3M">
    <property type="method" value="X-ray"/>
    <property type="resolution" value="1.90 A"/>
    <property type="chains" value="A/C=24-206"/>
</dbReference>
<dbReference type="PDB" id="6U3N">
    <property type="method" value="X-ray"/>
    <property type="resolution" value="2.80 A"/>
    <property type="chains" value="A=24-206"/>
</dbReference>
<dbReference type="PDB" id="6XP6">
    <property type="method" value="X-ray"/>
    <property type="resolution" value="2.40 A"/>
    <property type="chains" value="A/D=24-206"/>
</dbReference>
<dbReference type="PDB" id="7SG0">
    <property type="method" value="X-ray"/>
    <property type="resolution" value="3.00 A"/>
    <property type="chains" value="A=24-206"/>
</dbReference>
<dbReference type="PDB" id="7SG1">
    <property type="method" value="X-ray"/>
    <property type="resolution" value="3.10 A"/>
    <property type="chains" value="A/F=24-206"/>
</dbReference>
<dbReference type="PDB" id="7SG2">
    <property type="method" value="X-ray"/>
    <property type="resolution" value="3.10 A"/>
    <property type="chains" value="A/F=24-206"/>
</dbReference>
<dbReference type="PDB" id="8VSP">
    <property type="method" value="EM"/>
    <property type="resolution" value="3.12 A"/>
    <property type="chains" value="A/D/G=1-254"/>
</dbReference>
<dbReference type="PDB" id="8W83">
    <property type="method" value="X-ray"/>
    <property type="resolution" value="2.82 A"/>
    <property type="chains" value="C/G/K/O=24-206"/>
</dbReference>
<dbReference type="PDB" id="8W84">
    <property type="method" value="X-ray"/>
    <property type="resolution" value="2.10 A"/>
    <property type="chains" value="C=24-206"/>
</dbReference>
<dbReference type="PDB" id="8W85">
    <property type="method" value="X-ray"/>
    <property type="resolution" value="2.77 A"/>
    <property type="chains" value="C/G=24-206"/>
</dbReference>
<dbReference type="PDB" id="8W86">
    <property type="method" value="X-ray"/>
    <property type="resolution" value="2.24 A"/>
    <property type="chains" value="C/G=24-206"/>
</dbReference>
<dbReference type="PDBsum" id="1JK8"/>
<dbReference type="PDBsum" id="1S9V"/>
<dbReference type="PDBsum" id="1UVQ"/>
<dbReference type="PDBsum" id="2NNA"/>
<dbReference type="PDBsum" id="4GG6"/>
<dbReference type="PDBsum" id="4OZF"/>
<dbReference type="PDBsum" id="4OZG"/>
<dbReference type="PDBsum" id="4OZH"/>
<dbReference type="PDBsum" id="4OZI"/>
<dbReference type="PDBsum" id="5KSA"/>
<dbReference type="PDBsum" id="5KSB"/>
<dbReference type="PDBsum" id="5KSU"/>
<dbReference type="PDBsum" id="5KSV"/>
<dbReference type="PDBsum" id="6MFF"/>
<dbReference type="PDBsum" id="6MFG"/>
<dbReference type="PDBsum" id="6U3M"/>
<dbReference type="PDBsum" id="6U3N"/>
<dbReference type="PDBsum" id="6XP6"/>
<dbReference type="PDBsum" id="7SG0"/>
<dbReference type="PDBsum" id="7SG1"/>
<dbReference type="PDBsum" id="7SG2"/>
<dbReference type="PDBsum" id="8VSP"/>
<dbReference type="PDBsum" id="8W83"/>
<dbReference type="PDBsum" id="8W84"/>
<dbReference type="PDBsum" id="8W85"/>
<dbReference type="PDBsum" id="8W86"/>
<dbReference type="EMDB" id="EMD-43501"/>
<dbReference type="SMR" id="P01909"/>
<dbReference type="BioGRID" id="109362">
    <property type="interactions" value="154"/>
</dbReference>
<dbReference type="BioGRID" id="1529240">
    <property type="interactions" value="5"/>
</dbReference>
<dbReference type="FunCoup" id="P01909">
    <property type="interactions" value="465"/>
</dbReference>
<dbReference type="IntAct" id="P01909">
    <property type="interactions" value="129"/>
</dbReference>
<dbReference type="MINT" id="P01909"/>
<dbReference type="ChEMBL" id="CHEMBL4105884"/>
<dbReference type="TCDB" id="9.A.75.1.1">
    <property type="family name" value="the mhc ii receptor (mhc2r) family"/>
</dbReference>
<dbReference type="GlyConnect" id="1986">
    <property type="glycosylation" value="2 N-Linked glycans (1 site)"/>
</dbReference>
<dbReference type="GlyCosmos" id="P01909">
    <property type="glycosylation" value="2 sites, 2 glycans"/>
</dbReference>
<dbReference type="GlyGen" id="P01909">
    <property type="glycosylation" value="4 sites, 2 N-linked glycans (1 site)"/>
</dbReference>
<dbReference type="iPTMnet" id="P01909"/>
<dbReference type="BioMuta" id="HLA-DQA1"/>
<dbReference type="DMDM" id="122188"/>
<dbReference type="jPOST" id="P01909"/>
<dbReference type="MassIVE" id="P01909"/>
<dbReference type="PeptideAtlas" id="P01909"/>
<dbReference type="ProteomicsDB" id="51510"/>
<dbReference type="ABCD" id="P01909">
    <property type="antibodies" value="24 sequenced antibodies"/>
</dbReference>
<dbReference type="Antibodypedia" id="2728">
    <property type="antibodies" value="685 antibodies from 38 providers"/>
</dbReference>
<dbReference type="CPTC" id="P01909">
    <property type="antibodies" value="2 antibodies"/>
</dbReference>
<dbReference type="DNASU" id="3117"/>
<dbReference type="Ensembl" id="ENST00000343139.11">
    <property type="protein sequence ID" value="ENSP00000339398.5"/>
    <property type="gene ID" value="ENSG00000196735.13"/>
</dbReference>
<dbReference type="Ensembl" id="ENST00000374949.2">
    <property type="protein sequence ID" value="ENSP00000364087.2"/>
    <property type="gene ID" value="ENSG00000196735.13"/>
</dbReference>
<dbReference type="Ensembl" id="ENST00000383251.6">
    <property type="protein sequence ID" value="ENSP00000372738.2"/>
    <property type="gene ID" value="ENSG00000206305.12"/>
</dbReference>
<dbReference type="Ensembl" id="ENST00000395363.5">
    <property type="protein sequence ID" value="ENSP00000378767.1"/>
    <property type="gene ID" value="ENSG00000196735.13"/>
</dbReference>
<dbReference type="Ensembl" id="ENST00000399675.5">
    <property type="protein sequence ID" value="ENSP00000382583.1"/>
    <property type="gene ID" value="ENSG00000206305.12"/>
</dbReference>
<dbReference type="Ensembl" id="ENST00000399678.5">
    <property type="protein sequence ID" value="ENSP00000382586.1"/>
    <property type="gene ID" value="ENSG00000206305.12"/>
</dbReference>
<dbReference type="Ensembl" id="ENST00000418023.5">
    <property type="protein sequence ID" value="ENSP00000387892.1"/>
    <property type="gene ID" value="ENSG00000232062.9"/>
</dbReference>
<dbReference type="Ensembl" id="ENST00000444296.6">
    <property type="protein sequence ID" value="ENSP00000413237.2"/>
    <property type="gene ID" value="ENSG00000232062.9"/>
</dbReference>
<dbReference type="GeneID" id="3117"/>
<dbReference type="KEGG" id="hsa:3117"/>
<dbReference type="MANE-Select" id="ENST00000343139.11">
    <property type="protein sequence ID" value="ENSP00000339398.5"/>
    <property type="RefSeq nucleotide sequence ID" value="NM_002122.5"/>
    <property type="RefSeq protein sequence ID" value="NP_002113.2"/>
</dbReference>
<dbReference type="UCSC" id="uc003obr.4">
    <property type="organism name" value="human"/>
</dbReference>
<dbReference type="AGR" id="HGNC:4942"/>
<dbReference type="CTD" id="3117"/>
<dbReference type="DisGeNET" id="3117"/>
<dbReference type="GeneCards" id="HLA-DQA1"/>
<dbReference type="GeneReviews" id="HLA-DQA1"/>
<dbReference type="HGNC" id="HGNC:4942">
    <property type="gene designation" value="HLA-DQA1"/>
</dbReference>
<dbReference type="HPA" id="ENSG00000196735">
    <property type="expression patterns" value="Tissue enhanced (lung, lymphoid tissue)"/>
</dbReference>
<dbReference type="MalaCards" id="HLA-DQA1"/>
<dbReference type="MIM" id="146880">
    <property type="type" value="gene"/>
</dbReference>
<dbReference type="neXtProt" id="NX_P01909"/>
<dbReference type="NIAGADS" id="ENSG00000196735"/>
<dbReference type="Orphanet" id="391490">
    <property type="disease" value="Adult-onset myasthenia gravis"/>
</dbReference>
<dbReference type="Orphanet" id="930">
    <property type="disease" value="Idiopathic achalasia"/>
</dbReference>
<dbReference type="PharmGKB" id="PA35066"/>
<dbReference type="VEuPathDB" id="HostDB:ENSG00000196735"/>
<dbReference type="HOGENOM" id="CLU_069380_0_0_1"/>
<dbReference type="InParanoid" id="P01909"/>
<dbReference type="PAN-GO" id="P01909">
    <property type="GO annotations" value="6 GO annotations based on evolutionary models"/>
</dbReference>
<dbReference type="PhylomeDB" id="P01909"/>
<dbReference type="TreeFam" id="TF333797"/>
<dbReference type="PathwayCommons" id="P01909"/>
<dbReference type="Reactome" id="R-HSA-202424">
    <property type="pathway name" value="Downstream TCR signaling"/>
</dbReference>
<dbReference type="Reactome" id="R-HSA-202427">
    <property type="pathway name" value="Phosphorylation of CD3 and TCR zeta chains"/>
</dbReference>
<dbReference type="Reactome" id="R-HSA-202430">
    <property type="pathway name" value="Translocation of ZAP-70 to Immunological synapse"/>
</dbReference>
<dbReference type="Reactome" id="R-HSA-202433">
    <property type="pathway name" value="Generation of second messenger molecules"/>
</dbReference>
<dbReference type="Reactome" id="R-HSA-2132295">
    <property type="pathway name" value="MHC class II antigen presentation"/>
</dbReference>
<dbReference type="Reactome" id="R-HSA-389948">
    <property type="pathway name" value="Co-inhibition by PD-1"/>
</dbReference>
<dbReference type="Reactome" id="R-HSA-877300">
    <property type="pathway name" value="Interferon gamma signaling"/>
</dbReference>
<dbReference type="SignaLink" id="P01909"/>
<dbReference type="SIGNOR" id="P01909"/>
<dbReference type="BioGRID-ORCS" id="3117">
    <property type="hits" value="7 hits in 1073 CRISPR screens"/>
</dbReference>
<dbReference type="ChiTaRS" id="HLA-DQA1">
    <property type="organism name" value="human"/>
</dbReference>
<dbReference type="EvolutionaryTrace" id="P01909"/>
<dbReference type="GenomeRNAi" id="3117"/>
<dbReference type="Pharos" id="P01909">
    <property type="development level" value="Tbio"/>
</dbReference>
<dbReference type="PRO" id="PR:P01909"/>
<dbReference type="Proteomes" id="UP000005640">
    <property type="component" value="Chromosome 6"/>
</dbReference>
<dbReference type="RNAct" id="P01909">
    <property type="molecule type" value="protein"/>
</dbReference>
<dbReference type="Bgee" id="ENSG00000196735">
    <property type="expression patterns" value="Expressed in gall bladder and 162 other cell types or tissues"/>
</dbReference>
<dbReference type="ExpressionAtlas" id="P01909">
    <property type="expression patterns" value="baseline and differential"/>
</dbReference>
<dbReference type="GO" id="GO:0030669">
    <property type="term" value="C:clathrin-coated endocytic vesicle membrane"/>
    <property type="evidence" value="ECO:0000304"/>
    <property type="project" value="Reactome"/>
</dbReference>
<dbReference type="GO" id="GO:0030666">
    <property type="term" value="C:endocytic vesicle membrane"/>
    <property type="evidence" value="ECO:0000304"/>
    <property type="project" value="Reactome"/>
</dbReference>
<dbReference type="GO" id="GO:0012507">
    <property type="term" value="C:ER to Golgi transport vesicle membrane"/>
    <property type="evidence" value="ECO:0000304"/>
    <property type="project" value="Reactome"/>
</dbReference>
<dbReference type="GO" id="GO:0000139">
    <property type="term" value="C:Golgi membrane"/>
    <property type="evidence" value="ECO:0000304"/>
    <property type="project" value="Reactome"/>
</dbReference>
<dbReference type="GO" id="GO:0031902">
    <property type="term" value="C:late endosome membrane"/>
    <property type="evidence" value="ECO:0000318"/>
    <property type="project" value="GO_Central"/>
</dbReference>
<dbReference type="GO" id="GO:0098553">
    <property type="term" value="C:lumenal side of endoplasmic reticulum membrane"/>
    <property type="evidence" value="ECO:0000304"/>
    <property type="project" value="Reactome"/>
</dbReference>
<dbReference type="GO" id="GO:0005765">
    <property type="term" value="C:lysosomal membrane"/>
    <property type="evidence" value="ECO:0000318"/>
    <property type="project" value="GO_Central"/>
</dbReference>
<dbReference type="GO" id="GO:0016020">
    <property type="term" value="C:membrane"/>
    <property type="evidence" value="ECO:0007005"/>
    <property type="project" value="UniProtKB"/>
</dbReference>
<dbReference type="GO" id="GO:0042613">
    <property type="term" value="C:MHC class II protein complex"/>
    <property type="evidence" value="ECO:0000250"/>
    <property type="project" value="CAFA"/>
</dbReference>
<dbReference type="GO" id="GO:0005886">
    <property type="term" value="C:plasma membrane"/>
    <property type="evidence" value="ECO:0000304"/>
    <property type="project" value="Reactome"/>
</dbReference>
<dbReference type="GO" id="GO:0032588">
    <property type="term" value="C:trans-Golgi network membrane"/>
    <property type="evidence" value="ECO:0000304"/>
    <property type="project" value="Reactome"/>
</dbReference>
<dbReference type="GO" id="GO:0030658">
    <property type="term" value="C:transport vesicle membrane"/>
    <property type="evidence" value="ECO:0000304"/>
    <property type="project" value="Reactome"/>
</dbReference>
<dbReference type="GO" id="GO:0023026">
    <property type="term" value="F:MHC class II protein complex binding"/>
    <property type="evidence" value="ECO:0000318"/>
    <property type="project" value="GO_Central"/>
</dbReference>
<dbReference type="GO" id="GO:0032395">
    <property type="term" value="F:MHC class II receptor activity"/>
    <property type="evidence" value="ECO:0000304"/>
    <property type="project" value="UniProtKB"/>
</dbReference>
<dbReference type="GO" id="GO:0042605">
    <property type="term" value="F:peptide antigen binding"/>
    <property type="evidence" value="ECO:0000250"/>
    <property type="project" value="CAFA"/>
</dbReference>
<dbReference type="GO" id="GO:0002250">
    <property type="term" value="P:adaptive immune response"/>
    <property type="evidence" value="ECO:0007669"/>
    <property type="project" value="UniProtKB-KW"/>
</dbReference>
<dbReference type="GO" id="GO:0019886">
    <property type="term" value="P:antigen processing and presentation of exogenous peptide antigen via MHC class II"/>
    <property type="evidence" value="ECO:0000318"/>
    <property type="project" value="GO_Central"/>
</dbReference>
<dbReference type="GO" id="GO:0006955">
    <property type="term" value="P:immune response"/>
    <property type="evidence" value="ECO:0000303"/>
    <property type="project" value="UniProtKB"/>
</dbReference>
<dbReference type="GO" id="GO:0002503">
    <property type="term" value="P:peptide antigen assembly with MHC class II protein complex"/>
    <property type="evidence" value="ECO:0000318"/>
    <property type="project" value="GO_Central"/>
</dbReference>
<dbReference type="GO" id="GO:0050778">
    <property type="term" value="P:positive regulation of immune response"/>
    <property type="evidence" value="ECO:0000318"/>
    <property type="project" value="GO_Central"/>
</dbReference>
<dbReference type="GO" id="GO:0050870">
    <property type="term" value="P:positive regulation of T cell activation"/>
    <property type="evidence" value="ECO:0000318"/>
    <property type="project" value="GO_Central"/>
</dbReference>
<dbReference type="CDD" id="cd21008">
    <property type="entry name" value="IgC1_MHC_II_alpha_HLA-DQ"/>
    <property type="match status" value="1"/>
</dbReference>
<dbReference type="FunFam" id="2.60.40.10:FF:000280">
    <property type="entry name" value="HLA class II histocompatibility antigen, DR alpha chain"/>
    <property type="match status" value="1"/>
</dbReference>
<dbReference type="FunFam" id="3.10.320.10:FF:000002">
    <property type="entry name" value="HLA class II histocompatibility antigen, DR alpha chain"/>
    <property type="match status" value="1"/>
</dbReference>
<dbReference type="Gene3D" id="3.10.320.10">
    <property type="entry name" value="Class II Histocompatibility Antigen, M Beta Chain, Chain B, domain 1"/>
    <property type="match status" value="1"/>
</dbReference>
<dbReference type="Gene3D" id="2.60.40.10">
    <property type="entry name" value="Immunoglobulins"/>
    <property type="match status" value="1"/>
</dbReference>
<dbReference type="InterPro" id="IPR007110">
    <property type="entry name" value="Ig-like_dom"/>
</dbReference>
<dbReference type="InterPro" id="IPR036179">
    <property type="entry name" value="Ig-like_dom_sf"/>
</dbReference>
<dbReference type="InterPro" id="IPR013783">
    <property type="entry name" value="Ig-like_fold"/>
</dbReference>
<dbReference type="InterPro" id="IPR003006">
    <property type="entry name" value="Ig/MHC_CS"/>
</dbReference>
<dbReference type="InterPro" id="IPR003597">
    <property type="entry name" value="Ig_C1-set"/>
</dbReference>
<dbReference type="InterPro" id="IPR050160">
    <property type="entry name" value="MHC/Immunoglobulin"/>
</dbReference>
<dbReference type="InterPro" id="IPR011162">
    <property type="entry name" value="MHC_I/II-like_Ag-recog"/>
</dbReference>
<dbReference type="InterPro" id="IPR014745">
    <property type="entry name" value="MHC_II_a/b_N"/>
</dbReference>
<dbReference type="InterPro" id="IPR001003">
    <property type="entry name" value="MHC_II_a_N"/>
</dbReference>
<dbReference type="PANTHER" id="PTHR19944:SF59">
    <property type="entry name" value="HLA CLASS II HISTOCOMPATIBILITY ANTIGEN, DQ ALPHA 1 CHAIN"/>
    <property type="match status" value="1"/>
</dbReference>
<dbReference type="PANTHER" id="PTHR19944">
    <property type="entry name" value="MHC CLASS II-RELATED"/>
    <property type="match status" value="1"/>
</dbReference>
<dbReference type="Pfam" id="PF07654">
    <property type="entry name" value="C1-set"/>
    <property type="match status" value="1"/>
</dbReference>
<dbReference type="Pfam" id="PF00993">
    <property type="entry name" value="MHC_II_alpha"/>
    <property type="match status" value="1"/>
</dbReference>
<dbReference type="SMART" id="SM00407">
    <property type="entry name" value="IGc1"/>
    <property type="match status" value="1"/>
</dbReference>
<dbReference type="SMART" id="SM00920">
    <property type="entry name" value="MHC_II_alpha"/>
    <property type="match status" value="1"/>
</dbReference>
<dbReference type="SUPFAM" id="SSF48726">
    <property type="entry name" value="Immunoglobulin"/>
    <property type="match status" value="1"/>
</dbReference>
<dbReference type="SUPFAM" id="SSF54452">
    <property type="entry name" value="MHC antigen-recognition domain"/>
    <property type="match status" value="1"/>
</dbReference>
<dbReference type="PROSITE" id="PS50835">
    <property type="entry name" value="IG_LIKE"/>
    <property type="match status" value="1"/>
</dbReference>
<dbReference type="PROSITE" id="PS00290">
    <property type="entry name" value="IG_MHC"/>
    <property type="match status" value="1"/>
</dbReference>
<keyword id="KW-0002">3D-structure</keyword>
<keyword id="KW-1064">Adaptive immunity</keyword>
<keyword id="KW-1003">Cell membrane</keyword>
<keyword id="KW-0903">Direct protein sequencing</keyword>
<keyword id="KW-1015">Disulfide bond</keyword>
<keyword id="KW-0256">Endoplasmic reticulum</keyword>
<keyword id="KW-0967">Endosome</keyword>
<keyword id="KW-0325">Glycoprotein</keyword>
<keyword id="KW-0333">Golgi apparatus</keyword>
<keyword id="KW-0391">Immunity</keyword>
<keyword id="KW-0458">Lysosome</keyword>
<keyword id="KW-0472">Membrane</keyword>
<keyword id="KW-0491">MHC II</keyword>
<keyword id="KW-1267">Proteomics identification</keyword>
<keyword id="KW-1185">Reference proteome</keyword>
<keyword id="KW-0732">Signal</keyword>
<keyword id="KW-0812">Transmembrane</keyword>
<keyword id="KW-1133">Transmembrane helix</keyword>